<comment type="function">
    <text evidence="11 15 19 20 32 38 43 44 45">Molecular chaperone that promotes the maturation, structural maintenance and proper regulation of specific target proteins involved for instance in cell cycle control and signal transduction. Undergoes a functional cycle linked to its ATPase activity. This cycle probably induces conformational changes in the client proteins, thereby causing their activation. Interacts dynamically with various co-chaperones that modulate its substrate recognition, ATPase cycle and chaperone function (PubMed:16478993, PubMed:19696785). Engages with a range of client protein classes via its interaction with various co-chaperone proteins or complexes, that act as adapters, simultaneously able to interact with the specific client and the central chaperone itself. Recruitment of ATP and co-chaperone followed by client protein forms a functional chaperone. After the completion of the chaperoning process, properly folded client protein and co-chaperone leave HSP90 in an ADP-bound partially open conformation and finally, ADP is released from HSP90 which acquires an open conformation for the next cycle (PubMed:26991466, PubMed:27295069). Apart from its chaperone activity, it also plays a role in the regulation of the transcription machinery. HSP90 and its co-chaperones modulate transcription at least at three different levels. They first alter the steady-state levels of certain transcription factors in response to various physiological cues. Second, they modulate the activity of certain epigenetic modifiers, such as histone deacetylases or DNA methyl transferases, and thereby respond to the change in the environment. Third, they participate in the eviction of histones from the promoter region of certain genes and thereby turn on gene expression (PubMed:25973397). Antagonizes STUB1-mediated inhibition of TGF-beta signaling via inhibition of STUB1-mediated SMAD3 ubiquitination and degradation (PubMed:24613385). Promotes cell differentiation by chaperoning BIRC2 and thereby protecting from auto-ubiquitination and degradation by the proteasomal machinery (PubMed:18239673). Main chaperone involved in the phosphorylation/activation of the STAT1 by chaperoning both JAK2 and PRKCE under heat shock and in turn, activates its own transcription (PubMed:20353823). Involved in the translocation into ERGIC (endoplasmic reticulum-Golgi intermediate compartment) of leaderless cargos (lacking the secretion signal sequence) such as the interleukin 1/IL-1; the translocation process is mediated by the cargo receptor TMED10 (PubMed:32272059).</text>
</comment>
<comment type="function">
    <text evidence="23 48">(Microbial infection) Binding to N.meningitidis NadA stimulates monocytes (PubMed:21949862). Seems to interfere with N.meningitidis NadA-mediated invasion of human cells (Probable).</text>
</comment>
<comment type="activity regulation">
    <text evidence="17">In the resting state, through the dimerization of its C-terminal domain, HSP90 forms a homodimer which is defined as the open conformation. Upon ATP-binding, the N-terminal domain undergoes significant conformational changes and comes in contact to form an active closed conformation. After HSP90 finishes its chaperoning tasks of assisting the proper folding, stabilization and activation of client proteins under the active state, ATP molecule is hydrolyzed to ADP which then dissociates from HSP90 and directs the protein back to the resting state.</text>
</comment>
<comment type="biophysicochemical properties">
    <kinetics>
        <KM evidence="17">300 uM for ATP</KM>
    </kinetics>
</comment>
<comment type="subunit">
    <text evidence="3 4 7 8 9 11 12 15 16 17 18 20 21 24 27 29 30 31 32 33 34 36 37 38 39 40">Monomer (PubMed:24880080). Homodimer (PubMed:18400751, PubMed:7588731). Forms a complex with CDK6 and CDC37 (PubMed:25486457, PubMed:9482106). Interacts with UNC45A; binding to UNC45A involves 2 UNC45A monomers per HSP90AB1 dimer (PubMed:16478993). Interacts with CHORDC1 (By similarity). Interacts with DNAJC7 (PubMed:18620420). Interacts with FKBP4 (PubMed:15159550). May interact with NWD1 (PubMed:24681825). Interacts with SGTA (PubMed:16580629). Interacts with HSF1 in an ATP-dependent manner. Interacts with MET; the interaction suppresses MET kinase activity. Interacts with ERBB2 in an ATP-dependent manner; the interaction suppresses ERBB2 kinase activity. Interacts with HIF1A, KEAP1 and RHOBTB2 (PubMed:26517842). Interacts with STUB1 and SMAD3 (PubMed:24613385). Interacts with XPO1 and AHSA1 (PubMed:22022502, PubMed:25486457). Interacts with BIRC2 (PubMed:25486457). Interacts with KCNQ4; promotes cell surface expression of KCNQ4 (PubMed:23431407). Interacts with BIRC2; prevents auto-ubiquitination and degradation of its client protein BIRC2 (PubMed:18239673). Interacts with NOS3 (PubMed:23585225). Interacts with AHR; interaction is inhibited by HSP90AB1 phosphorylation on Ser-226 and Ser-255 (PubMed:15581363). Interacts with STIP1 and CDC37; upon SMYD2-dependent methylation (PubMed:24880080). Interacts with JAK2 and PRKCE; promotes functional activation in a heat shock-dependent manner (PubMed:20353823). Interacts with HSP90AA1; interaction is constitutive (PubMed:20353823). HSP90AB1-CDC37 chaperone complex interacts with inactive MAPK7 (via N-terminal half) in resting cells; the interaction is MAP2K5-independent and prevents from ubiquitination and proteasomal degradation (PubMed:23428871). Interacts with CDC25A; prevents heat shock-mediated CDC25A degradation and contributes to cell cycle progression (PubMed:22843495). Interacts with TP53 (via DNA binding domain); suppresses TP53 aggregation and prevents from irreversible thermal inactivation (PubMed:15358771). Interacts with TGFB1 processed form (LAP); inhibits latent TGFB1 activation (PubMed:20599762). Interacts with TRIM8; prevents nucleus translocation of phosphorylated STAT3 and HSP90AB1 (By similarity). Interacts with NR3C1 (via domain NR LBD) and NR1D1 (via domain NR LBD) (By similarity). Interacts with PDCL3 (By similarity). Interacts with TTC4 (via TPR repeats) (PubMed:18320024). Interacts with IL1B; the interaction facilitates cargo translocation into the ERGIC (PubMed:32272059).</text>
</comment>
<comment type="subunit">
    <text evidence="23 25">(Microbial infection) Protein on the cell surface interacts with N.meningitidis serogroup B adhesin A (nadA).</text>
</comment>
<comment type="interaction">
    <interactant intactId="EBI-352572">
        <id>P08238</id>
    </interactant>
    <interactant intactId="EBI-1384128">
        <id>P36896</id>
        <label>ACVR1B</label>
    </interactant>
    <organismsDiffer>false</organismsDiffer>
    <experiments>2</experiments>
</comment>
<comment type="interaction">
    <interactant intactId="EBI-352572">
        <id>P08238</id>
    </interactant>
    <interactant intactId="EBI-527363">
        <id>Q9UL18</id>
        <label>AGO1</label>
    </interactant>
    <organismsDiffer>false</organismsDiffer>
    <experiments>5</experiments>
</comment>
<comment type="interaction">
    <interactant intactId="EBI-352572">
        <id>P08238</id>
    </interactant>
    <interactant intactId="EBI-448610">
        <id>O95433</id>
        <label>AHSA1</label>
    </interactant>
    <organismsDiffer>false</organismsDiffer>
    <experiments>5</experiments>
</comment>
<comment type="interaction">
    <interactant intactId="EBI-352572">
        <id>P08238</id>
    </interactant>
    <interactant intactId="EBI-704197">
        <id>O00170</id>
        <label>AIP</label>
    </interactant>
    <organismsDiffer>false</organismsDiffer>
    <experiments>8</experiments>
</comment>
<comment type="interaction">
    <interactant intactId="EBI-352572">
        <id>P08238</id>
    </interactant>
    <interactant intactId="EBI-296087">
        <id>P31749</id>
        <label>AKT1</label>
    </interactant>
    <organismsDiffer>false</organismsDiffer>
    <experiments>3</experiments>
</comment>
<comment type="interaction">
    <interactant intactId="EBI-352572">
        <id>P08238</id>
    </interactant>
    <interactant intactId="EBI-296058">
        <id>P31751</id>
        <label>AKT2</label>
    </interactant>
    <organismsDiffer>false</organismsDiffer>
    <experiments>2</experiments>
</comment>
<comment type="interaction">
    <interactant intactId="EBI-352572">
        <id>P08238</id>
    </interactant>
    <interactant intactId="EBI-357361">
        <id>Q9UM73</id>
        <label>ALK</label>
    </interactant>
    <organismsDiffer>false</organismsDiffer>
    <experiments>2</experiments>
</comment>
<comment type="interaction">
    <interactant intactId="EBI-352572">
        <id>P08238</id>
    </interactant>
    <interactant intactId="EBI-6423788">
        <id>Q16671</id>
        <label>AMHR2</label>
    </interactant>
    <organismsDiffer>false</organismsDiffer>
    <experiments>4</experiments>
</comment>
<comment type="interaction">
    <interactant intactId="EBI-352572">
        <id>P08238</id>
    </interactant>
    <interactant intactId="EBI-1223554">
        <id>Q01432</id>
        <label>AMPD3</label>
    </interactant>
    <organismsDiffer>false</organismsDiffer>
    <experiments>2</experiments>
</comment>
<comment type="interaction">
    <interactant intactId="EBI-352572">
        <id>P08238</id>
    </interactant>
    <interactant intactId="EBI-365961">
        <id>P10398</id>
        <label>ARAF</label>
    </interactant>
    <organismsDiffer>false</organismsDiffer>
    <experiments>9</experiments>
</comment>
<comment type="interaction">
    <interactant intactId="EBI-352572">
        <id>P08238</id>
    </interactant>
    <interactant intactId="EBI-624291">
        <id>Q96GD4</id>
        <label>AURKB</label>
    </interactant>
    <organismsDiffer>false</organismsDiffer>
    <experiments>5</experiments>
</comment>
<comment type="interaction">
    <interactant intactId="EBI-352572">
        <id>P08238</id>
    </interactant>
    <interactant intactId="EBI-2850927">
        <id>P30530</id>
        <label>AXL</label>
    </interactant>
    <organismsDiffer>false</organismsDiffer>
    <experiments>3</experiments>
</comment>
<comment type="interaction">
    <interactant intactId="EBI-352572">
        <id>P08238</id>
    </interactant>
    <interactant intactId="EBI-2105445">
        <id>P51451</id>
        <label>BLK</label>
    </interactant>
    <organismsDiffer>false</organismsDiffer>
    <experiments>3</experiments>
</comment>
<comment type="interaction">
    <interactant intactId="EBI-352572">
        <id>P08238</id>
    </interactant>
    <interactant intactId="EBI-696657">
        <id>P51813</id>
        <label>BMX</label>
    </interactant>
    <organismsDiffer>false</organismsDiffer>
    <experiments>3</experiments>
</comment>
<comment type="interaction">
    <interactant intactId="EBI-352572">
        <id>P08238</id>
    </interactant>
    <interactant intactId="EBI-365980">
        <id>P15056</id>
        <label>BRAF</label>
    </interactant>
    <organismsDiffer>false</organismsDiffer>
    <experiments>4</experiments>
</comment>
<comment type="interaction">
    <interactant intactId="EBI-352572">
        <id>P08238</id>
    </interactant>
    <interactant intactId="EBI-624835">
        <id>Q06187</id>
        <label>BTK</label>
    </interactant>
    <organismsDiffer>false</organismsDiffer>
    <experiments>3</experiments>
</comment>
<comment type="interaction">
    <interactant intactId="EBI-352572">
        <id>P08238</id>
    </interactant>
    <interactant intactId="EBI-1383687">
        <id>Q9UQM7</id>
        <label>CAMK2A</label>
    </interactant>
    <organismsDiffer>false</organismsDiffer>
    <experiments>3</experiments>
</comment>
<comment type="interaction">
    <interactant intactId="EBI-352572">
        <id>P08238</id>
    </interactant>
    <interactant intactId="EBI-1383465">
        <id>Q13555</id>
        <label>CAMK2G</label>
    </interactant>
    <organismsDiffer>false</organismsDiffer>
    <experiments>2</experiments>
</comment>
<comment type="interaction">
    <interactant intactId="EBI-352572">
        <id>P08238</id>
    </interactant>
    <interactant intactId="EBI-295634">
        <id>Q16543</id>
        <label>CDC37</label>
    </interactant>
    <organismsDiffer>false</organismsDiffer>
    <experiments>14</experiments>
</comment>
<comment type="interaction">
    <interactant intactId="EBI-352572">
        <id>P08238</id>
    </interactant>
    <interactant intactId="EBI-2841876">
        <id>Q7L3B6</id>
        <label>CDC37L1</label>
    </interactant>
    <organismsDiffer>false</organismsDiffer>
    <experiments>8</experiments>
</comment>
<comment type="interaction">
    <interactant intactId="EBI-352572">
        <id>P08238</id>
    </interactant>
    <interactant intactId="EBI-1646959">
        <id>Q15131</id>
        <label>CDK10</label>
    </interactant>
    <organismsDiffer>false</organismsDiffer>
    <experiments>3</experiments>
</comment>
<comment type="interaction">
    <interactant intactId="EBI-352572">
        <id>P08238</id>
    </interactant>
    <interactant intactId="EBI-373024">
        <id>Q9UQ88</id>
        <label>CDK11A</label>
    </interactant>
    <organismsDiffer>false</organismsDiffer>
    <experiments>3</experiments>
</comment>
<comment type="interaction">
    <interactant intactId="EBI-352572">
        <id>P08238</id>
    </interactant>
    <interactant intactId="EBI-1043945">
        <id>O94921</id>
        <label>CDK14</label>
    </interactant>
    <organismsDiffer>false</organismsDiffer>
    <experiments>2</experiments>
</comment>
<comment type="interaction">
    <interactant intactId="EBI-352572">
        <id>P08238</id>
    </interactant>
    <interactant intactId="EBI-1051975">
        <id>Q96Q40</id>
        <label>CDK15</label>
    </interactant>
    <organismsDiffer>false</organismsDiffer>
    <experiments>2</experiments>
</comment>
<comment type="interaction">
    <interactant intactId="EBI-352572">
        <id>P08238</id>
    </interactant>
    <interactant intactId="EBI-1245761">
        <id>Q00526</id>
        <label>CDK3</label>
    </interactant>
    <organismsDiffer>false</organismsDiffer>
    <experiments>4</experiments>
</comment>
<comment type="interaction">
    <interactant intactId="EBI-352572">
        <id>P08238</id>
    </interactant>
    <interactant intactId="EBI-295644">
        <id>P11802</id>
        <label>CDK4</label>
    </interactant>
    <organismsDiffer>false</organismsDiffer>
    <experiments>7</experiments>
</comment>
<comment type="interaction">
    <interactant intactId="EBI-352572">
        <id>P08238</id>
    </interactant>
    <interactant intactId="EBI-295663">
        <id>Q00534</id>
        <label>CDK6</label>
    </interactant>
    <organismsDiffer>false</organismsDiffer>
    <experiments>3</experiments>
</comment>
<comment type="interaction">
    <interactant intactId="EBI-352572">
        <id>P08238</id>
    </interactant>
    <interactant intactId="EBI-1245958">
        <id>P50613</id>
        <label>CDK7</label>
    </interactant>
    <organismsDiffer>false</organismsDiffer>
    <experiments>4</experiments>
</comment>
<comment type="interaction">
    <interactant intactId="EBI-352572">
        <id>P08238</id>
    </interactant>
    <interactant intactId="EBI-1383449">
        <id>P50750</id>
        <label>CDK9</label>
    </interactant>
    <organismsDiffer>false</organismsDiffer>
    <experiments>6</experiments>
</comment>
<comment type="interaction">
    <interactant intactId="EBI-352572">
        <id>P08238</id>
    </interactant>
    <interactant intactId="EBI-974488">
        <id>O14757</id>
        <label>CHEK1</label>
    </interactant>
    <organismsDiffer>false</organismsDiffer>
    <experiments>3</experiments>
</comment>
<comment type="interaction">
    <interactant intactId="EBI-352572">
        <id>P08238</id>
    </interactant>
    <interactant intactId="EBI-2550959">
        <id>Q9UHD1</id>
        <label>CHORDC1</label>
    </interactant>
    <organismsDiffer>false</organismsDiffer>
    <experiments>6</experiments>
</comment>
<comment type="interaction">
    <interactant intactId="EBI-352572">
        <id>P08238</id>
    </interactant>
    <interactant intactId="EBI-81249">
        <id>O15111</id>
        <label>CHUK</label>
    </interactant>
    <organismsDiffer>false</organismsDiffer>
    <experiments>2</experiments>
</comment>
<comment type="interaction">
    <interactant intactId="EBI-352572">
        <id>P08238</id>
    </interactant>
    <interactant intactId="EBI-6381479">
        <id>Q9UPZ9</id>
        <label>CILK1</label>
    </interactant>
    <organismsDiffer>false</organismsDiffer>
    <experiments>3</experiments>
</comment>
<comment type="interaction">
    <interactant intactId="EBI-352572">
        <id>P08238</id>
    </interactant>
    <interactant intactId="EBI-745579">
        <id>P49761</id>
        <label>CLK3</label>
    </interactant>
    <organismsDiffer>false</organismsDiffer>
    <experiments>2</experiments>
</comment>
<comment type="interaction">
    <interactant intactId="EBI-352572">
        <id>P08238</id>
    </interactant>
    <interactant intactId="EBI-1383726">
        <id>P48729</id>
        <label>CSNK1A1</label>
    </interactant>
    <organismsDiffer>false</organismsDiffer>
    <experiments>2</experiments>
</comment>
<comment type="interaction">
    <interactant intactId="EBI-352572">
        <id>P08238</id>
    </interactant>
    <interactant intactId="EBI-749343">
        <id>P49674</id>
        <label>CSNK1E</label>
    </interactant>
    <organismsDiffer>false</organismsDiffer>
    <experiments>2</experiments>
</comment>
<comment type="interaction">
    <interactant intactId="EBI-352572">
        <id>P08238</id>
    </interactant>
    <interactant intactId="EBI-347804">
        <id>P68400</id>
        <label>CSNK2A1</label>
    </interactant>
    <organismsDiffer>false</organismsDiffer>
    <experiments>2</experiments>
</comment>
<comment type="interaction">
    <interactant intactId="EBI-352572">
        <id>P08238</id>
    </interactant>
    <interactant intactId="EBI-359390">
        <id>Q13616</id>
        <label>CUL1</label>
    </interactant>
    <organismsDiffer>false</organismsDiffer>
    <experiments>2</experiments>
</comment>
<comment type="interaction">
    <interactant intactId="EBI-352572">
        <id>P08238</id>
    </interactant>
    <interactant intactId="EBI-456179">
        <id>Q13617</id>
        <label>CUL2</label>
    </interactant>
    <organismsDiffer>false</organismsDiffer>
    <experiments>2</experiments>
</comment>
<comment type="interaction">
    <interactant intactId="EBI-352572">
        <id>P08238</id>
    </interactant>
    <interactant intactId="EBI-456129">
        <id>Q13618</id>
        <label>CUL3</label>
    </interactant>
    <organismsDiffer>false</organismsDiffer>
    <experiments>4</experiments>
</comment>
<comment type="interaction">
    <interactant intactId="EBI-352572">
        <id>P08238</id>
    </interactant>
    <interactant intactId="EBI-456106">
        <id>Q13619</id>
        <label>CUL4A</label>
    </interactant>
    <organismsDiffer>false</organismsDiffer>
    <experiments>2</experiments>
</comment>
<comment type="interaction">
    <interactant intactId="EBI-352572">
        <id>P08238</id>
    </interactant>
    <interactant intactId="EBI-456067">
        <id>Q13620</id>
        <label>CUL4B</label>
    </interactant>
    <organismsDiffer>false</organismsDiffer>
    <experiments>2</experiments>
</comment>
<comment type="interaction">
    <interactant intactId="EBI-352572">
        <id>P08238</id>
    </interactant>
    <interactant intactId="EBI-1381484">
        <id>Q16832</id>
        <label>DDR2</label>
    </interactant>
    <organismsDiffer>false</organismsDiffer>
    <experiments>3</experiments>
</comment>
<comment type="interaction">
    <interactant intactId="EBI-352572">
        <id>P08238</id>
    </interactant>
    <interactant intactId="EBI-634187">
        <id>Q9Y463</id>
        <label>DYRK1B</label>
    </interactant>
    <organismsDiffer>false</organismsDiffer>
    <experiments>2</experiments>
</comment>
<comment type="interaction">
    <interactant intactId="EBI-352572">
        <id>P08238</id>
    </interactant>
    <interactant intactId="EBI-3914009">
        <id>Q9NR20</id>
        <label>DYRK4</label>
    </interactant>
    <organismsDiffer>false</organismsDiffer>
    <experiments>2</experiments>
</comment>
<comment type="interaction">
    <interactant intactId="EBI-352572">
        <id>P08238</id>
    </interactant>
    <interactant intactId="EBI-297353">
        <id>P00533</id>
        <label>EGFR</label>
    </interactant>
    <organismsDiffer>false</organismsDiffer>
    <experiments>10</experiments>
</comment>
<comment type="interaction">
    <interactant intactId="EBI-352572">
        <id>P08238</id>
    </interactant>
    <interactant intactId="EBI-640377">
        <id>Q9BQI3</id>
        <label>EIF2AK1</label>
    </interactant>
    <organismsDiffer>false</organismsDiffer>
    <experiments>2</experiments>
</comment>
<comment type="interaction">
    <interactant intactId="EBI-352572">
        <id>P08238</id>
    </interactant>
    <interactant intactId="EBI-702104">
        <id>P29317</id>
        <label>EPHA2</label>
    </interactant>
    <organismsDiffer>false</organismsDiffer>
    <experiments>2</experiments>
</comment>
<comment type="interaction">
    <interactant intactId="EBI-352572">
        <id>P08238</id>
    </interactant>
    <interactant intactId="EBI-714076">
        <id>O15197</id>
        <label>EPHB6</label>
    </interactant>
    <organismsDiffer>false</organismsDiffer>
    <experiments>3</experiments>
</comment>
<comment type="interaction">
    <interactant intactId="EBI-352572">
        <id>P08238</id>
    </interactant>
    <interactant intactId="EBI-641062">
        <id>P04626</id>
        <label>ERBB2</label>
    </interactant>
    <organismsDiffer>false</organismsDiffer>
    <experiments>5</experiments>
</comment>
<comment type="interaction">
    <interactant intactId="EBI-352572">
        <id>P08238</id>
    </interactant>
    <interactant intactId="EBI-720706">
        <id>P21860</id>
        <label>ERBB3</label>
    </interactant>
    <organismsDiffer>false</organismsDiffer>
    <experiments>3</experiments>
</comment>
<comment type="interaction">
    <interactant intactId="EBI-352572">
        <id>P08238</id>
    </interactant>
    <interactant intactId="EBI-80371">
        <id>Q15303</id>
        <label>ERBB4</label>
    </interactant>
    <organismsDiffer>false</organismsDiffer>
    <experiments>2</experiments>
</comment>
<comment type="interaction">
    <interactant intactId="EBI-352572">
        <id>P08238</id>
    </interactant>
    <interactant intactId="EBI-6123466">
        <id>Q96A26</id>
        <label>FAM162A</label>
    </interactant>
    <organismsDiffer>false</organismsDiffer>
    <experiments>3</experiments>
</comment>
<comment type="interaction">
    <interactant intactId="EBI-352572">
        <id>P08238</id>
    </interactant>
    <interactant intactId="EBI-724253">
        <id>Q9UKC9</id>
        <label>FBXL2</label>
    </interactant>
    <organismsDiffer>false</organismsDiffer>
    <experiments>2</experiments>
</comment>
<comment type="interaction">
    <interactant intactId="EBI-352572">
        <id>P08238</id>
    </interactant>
    <interactant intactId="EBI-6425658">
        <id>O75426</id>
        <label>FBXO24</label>
    </interactant>
    <organismsDiffer>false</organismsDiffer>
    <experiments>2</experiments>
</comment>
<comment type="interaction">
    <interactant intactId="EBI-352572">
        <id>P08238</id>
    </interactant>
    <interactant intactId="EBI-914727">
        <id>Q9UKT8</id>
        <label>FBXW2</label>
    </interactant>
    <organismsDiffer>false</organismsDiffer>
    <experiments>2</experiments>
</comment>
<comment type="interaction">
    <interactant intactId="EBI-352572">
        <id>P08238</id>
    </interactant>
    <interactant intactId="EBI-1380661">
        <id>P16591</id>
        <label>FER</label>
    </interactant>
    <organismsDiffer>false</organismsDiffer>
    <experiments>2</experiments>
</comment>
<comment type="interaction">
    <interactant intactId="EBI-352572">
        <id>P08238</id>
    </interactant>
    <interactant intactId="EBI-1028277">
        <id>P11362</id>
        <label>FGFR1</label>
    </interactant>
    <organismsDiffer>false</organismsDiffer>
    <experiments>3</experiments>
</comment>
<comment type="interaction">
    <interactant intactId="EBI-352572">
        <id>P08238</id>
    </interactant>
    <interactant intactId="EBI-348399">
        <id>P22607</id>
        <label>FGFR3</label>
    </interactant>
    <organismsDiffer>false</organismsDiffer>
    <experiments>4</experiments>
</comment>
<comment type="interaction">
    <interactant intactId="EBI-352572">
        <id>P08238</id>
    </interactant>
    <interactant intactId="EBI-1383732">
        <id>P09769</id>
        <label>FGR</label>
    </interactant>
    <organismsDiffer>false</organismsDiffer>
    <experiments>4</experiments>
</comment>
<comment type="interaction">
    <interactant intactId="EBI-352572">
        <id>P08238</id>
    </interactant>
    <interactant intactId="EBI-1047444">
        <id>Q02790</id>
        <label>FKBP4</label>
    </interactant>
    <organismsDiffer>false</organismsDiffer>
    <experiments>6</experiments>
</comment>
<comment type="interaction">
    <interactant intactId="EBI-352572">
        <id>P08238</id>
    </interactant>
    <interactant intactId="EBI-306914">
        <id>Q13451</id>
        <label>FKBP5</label>
    </interactant>
    <organismsDiffer>false</organismsDiffer>
    <experiments>17</experiments>
</comment>
<comment type="interaction">
    <interactant intactId="EBI-352572">
        <id>P08238</id>
    </interactant>
    <interactant intactId="EBI-724839">
        <id>Q14318</id>
        <label>FKBP8</label>
    </interactant>
    <organismsDiffer>false</organismsDiffer>
    <experiments>2</experiments>
</comment>
<comment type="interaction">
    <interactant intactId="EBI-352572">
        <id>P08238</id>
    </interactant>
    <interactant intactId="EBI-1005467">
        <id>P35916</id>
        <label>FLT4</label>
    </interactant>
    <organismsDiffer>false</organismsDiffer>
    <experiments>3</experiments>
</comment>
<comment type="interaction">
    <interactant intactId="EBI-352572">
        <id>P08238</id>
    </interactant>
    <interactant intactId="EBI-515315">
        <id>P06241</id>
        <label>FYN</label>
    </interactant>
    <organismsDiffer>false</organismsDiffer>
    <experiments>5</experiments>
</comment>
<comment type="interaction">
    <interactant intactId="EBI-352572">
        <id>P08238</id>
    </interactant>
    <interactant intactId="EBI-722747">
        <id>P43250</id>
        <label>GRK6</label>
    </interactant>
    <organismsDiffer>false</organismsDiffer>
    <experiments>2</experiments>
</comment>
<comment type="interaction">
    <interactant intactId="EBI-352572">
        <id>P08238</id>
    </interactant>
    <interactant intactId="EBI-6423032">
        <id>Q8WTQ7</id>
        <label>GRK7</label>
    </interactant>
    <organismsDiffer>false</organismsDiffer>
    <experiments>2</experiments>
</comment>
<comment type="interaction">
    <interactant intactId="EBI-352572">
        <id>P08238</id>
    </interactant>
    <interactant intactId="EBI-1044067">
        <id>P49840</id>
        <label>GSK3A</label>
    </interactant>
    <organismsDiffer>false</organismsDiffer>
    <experiments>3</experiments>
</comment>
<comment type="interaction">
    <interactant intactId="EBI-352572">
        <id>P08238</id>
    </interactant>
    <interactant intactId="EBI-1237328">
        <id>Q8TF76</id>
        <label>HASPIN</label>
    </interactant>
    <organismsDiffer>false</organismsDiffer>
    <experiments>2</experiments>
</comment>
<comment type="interaction">
    <interactant intactId="EBI-352572">
        <id>P08238</id>
    </interactant>
    <interactant intactId="EBI-346340">
        <id>P08631</id>
        <label>HCK</label>
    </interactant>
    <organismsDiffer>false</organismsDiffer>
    <experiments>4</experiments>
</comment>
<comment type="interaction">
    <interactant intactId="EBI-352572">
        <id>P08238</id>
    </interactant>
    <interactant intactId="EBI-6381114">
        <id>Q8NE63</id>
        <label>HIPK4</label>
    </interactant>
    <organismsDiffer>false</organismsDiffer>
    <experiments>2</experiments>
</comment>
<comment type="interaction">
    <interactant intactId="EBI-352572">
        <id>P08238</id>
    </interactant>
    <interactant intactId="EBI-352572">
        <id>P08238</id>
        <label>HSP90AB1</label>
    </interactant>
    <organismsDiffer>false</organismsDiffer>
    <experiments>4</experiments>
</comment>
<comment type="interaction">
    <interactant intactId="EBI-352572">
        <id>P08238</id>
    </interactant>
    <interactant intactId="EBI-307369">
        <id>Q14164</id>
        <label>IKBKE</label>
    </interactant>
    <organismsDiffer>false</organismsDiffer>
    <experiments>2</experiments>
</comment>
<comment type="interaction">
    <interactant intactId="EBI-352572">
        <id>P08238</id>
    </interactant>
    <interactant intactId="EBI-81279">
        <id>Q9Y6K9</id>
        <label>IKBKG</label>
    </interactant>
    <organismsDiffer>false</organismsDiffer>
    <experiments>4</experiments>
</comment>
<comment type="interaction">
    <interactant intactId="EBI-352572">
        <id>P08238</id>
    </interactant>
    <interactant intactId="EBI-747644">
        <id>Q13418</id>
        <label>ILK</label>
    </interactant>
    <organismsDiffer>false</organismsDiffer>
    <experiments>2</experiments>
</comment>
<comment type="interaction">
    <interactant intactId="EBI-352572">
        <id>P08238</id>
    </interactant>
    <interactant intactId="EBI-6424336">
        <id>P14616</id>
        <label>INSRR</label>
    </interactant>
    <organismsDiffer>false</organismsDiffer>
    <experiments>4</experiments>
</comment>
<comment type="interaction">
    <interactant intactId="EBI-352572">
        <id>P08238</id>
    </interactant>
    <interactant intactId="EBI-968552">
        <id>Q08881</id>
        <label>ITK</label>
    </interactant>
    <organismsDiffer>false</organismsDiffer>
    <experiments>3</experiments>
</comment>
<comment type="interaction">
    <interactant intactId="EBI-352572">
        <id>P08238</id>
    </interactant>
    <interactant intactId="EBI-1996072">
        <id>Q53GT1</id>
        <label>KLHL22</label>
    </interactant>
    <organismsDiffer>false</organismsDiffer>
    <experiments>2</experiments>
</comment>
<comment type="interaction">
    <interactant intactId="EBI-352572">
        <id>P08238</id>
    </interactant>
    <interactant intactId="EBI-6426443">
        <id>Q2WGJ6</id>
        <label>KLHL38</label>
    </interactant>
    <organismsDiffer>false</organismsDiffer>
    <experiments>3</experiments>
</comment>
<comment type="interaction">
    <interactant intactId="EBI-352572">
        <id>P08238</id>
    </interactant>
    <interactant intactId="EBI-1348">
        <id>P06239</id>
        <label>LCK</label>
    </interactant>
    <organismsDiffer>false</organismsDiffer>
    <experiments>4</experiments>
</comment>
<comment type="interaction">
    <interactant intactId="EBI-352572">
        <id>P08238</id>
    </interactant>
    <interactant intactId="EBI-1384350">
        <id>P53671</id>
        <label>LIMK2</label>
    </interactant>
    <organismsDiffer>false</organismsDiffer>
    <experiments>3</experiments>
</comment>
<comment type="interaction">
    <interactant intactId="EBI-352572">
        <id>P08238</id>
    </interactant>
    <interactant intactId="EBI-79452">
        <id>P07948</id>
        <label>LYN</label>
    </interactant>
    <organismsDiffer>false</organismsDiffer>
    <experiments>2</experiments>
</comment>
<comment type="interaction">
    <interactant intactId="EBI-352572">
        <id>P08238</id>
    </interactant>
    <interactant intactId="EBI-6447163">
        <id>Q8N7X4</id>
        <label>MAGEB6</label>
    </interactant>
    <organismsDiffer>false</organismsDiffer>
    <experiments>3</experiments>
</comment>
<comment type="interaction">
    <interactant intactId="EBI-352572">
        <id>P08238</id>
    </interactant>
    <interactant intactId="EBI-307294">
        <id>Q13163</id>
        <label>MAP2K5</label>
    </interactant>
    <organismsDiffer>false</organismsDiffer>
    <experiments>4</experiments>
</comment>
<comment type="interaction">
    <interactant intactId="EBI-352572">
        <id>P08238</id>
    </interactant>
    <interactant intactId="EBI-492605">
        <id>O14733</id>
        <label>MAP2K7</label>
    </interactant>
    <organismsDiffer>false</organismsDiffer>
    <experiments>2</experiments>
</comment>
<comment type="interaction">
    <interactant intactId="EBI-352572">
        <id>P08238</id>
    </interactant>
    <interactant intactId="EBI-358011">
        <id>Q99558</id>
        <label>MAP3K14</label>
    </interactant>
    <organismsDiffer>false</organismsDiffer>
    <experiments>5</experiments>
</comment>
<comment type="interaction">
    <interactant intactId="EBI-352572">
        <id>P08238</id>
    </interactant>
    <interactant intactId="EBI-354900">
        <id>P41279</id>
        <label>MAP3K8</label>
    </interactant>
    <organismsDiffer>false</organismsDiffer>
    <experiments>2</experiments>
</comment>
<comment type="interaction">
    <interactant intactId="EBI-352572">
        <id>P08238</id>
    </interactant>
    <interactant intactId="EBI-3951604">
        <id>P80192</id>
        <label>MAP3K9</label>
    </interactant>
    <organismsDiffer>false</organismsDiffer>
    <experiments>2</experiments>
</comment>
<comment type="interaction">
    <interactant intactId="EBI-352572">
        <id>P08238</id>
    </interactant>
    <interactant intactId="EBI-881">
        <id>Q92918</id>
        <label>MAP4K1</label>
    </interactant>
    <organismsDiffer>false</organismsDiffer>
    <experiments>4</experiments>
</comment>
<comment type="interaction">
    <interactant intactId="EBI-352572">
        <id>P08238</id>
    </interactant>
    <interactant intactId="EBI-1383794">
        <id>Q8TD08</id>
        <label>MAPK15</label>
    </interactant>
    <organismsDiffer>false</organismsDiffer>
    <experiments>2</experiments>
</comment>
<comment type="interaction">
    <interactant intactId="EBI-352572">
        <id>P08238</id>
    </interactant>
    <interactant intactId="EBI-3906061">
        <id>P31152</id>
        <label>MAPK4</label>
    </interactant>
    <organismsDiffer>false</organismsDiffer>
    <experiments>3</experiments>
</comment>
<comment type="interaction">
    <interactant intactId="EBI-352572">
        <id>P08238</id>
    </interactant>
    <interactant intactId="EBI-366233">
        <id>P10636-8</id>
        <label>MAPT</label>
    </interactant>
    <organismsDiffer>false</organismsDiffer>
    <experiments>18</experiments>
</comment>
<comment type="interaction">
    <interactant intactId="EBI-352572">
        <id>P08238</id>
    </interactant>
    <interactant intactId="EBI-751664">
        <id>P42679</id>
        <label>MATK</label>
    </interactant>
    <organismsDiffer>false</organismsDiffer>
    <experiments>2</experiments>
</comment>
<comment type="interaction">
    <interactant intactId="EBI-352572">
        <id>P08238</id>
    </interactant>
    <interactant intactId="EBI-1757866">
        <id>P00540</id>
        <label>MOS</label>
    </interactant>
    <organismsDiffer>false</organismsDiffer>
    <experiments>2</experiments>
</comment>
<comment type="interaction">
    <interactant intactId="EBI-352572">
        <id>P08238</id>
    </interactant>
    <interactant intactId="EBI-6423196">
        <id>O15146</id>
        <label>MUSK</label>
    </interactant>
    <organismsDiffer>false</organismsDiffer>
    <experiments>2</experiments>
</comment>
<comment type="interaction">
    <interactant intactId="EBI-352572">
        <id>P08238</id>
    </interactant>
    <interactant intactId="EBI-356910">
        <id>Q9H1R3</id>
        <label>MYLK2</label>
    </interactant>
    <organismsDiffer>false</organismsDiffer>
    <experiments>3</experiments>
</comment>
<comment type="interaction">
    <interactant intactId="EBI-352572">
        <id>P08238</id>
    </interactant>
    <interactant intactId="EBI-6424604">
        <id>Q86YV6</id>
        <label>MYLK4</label>
    </interactant>
    <organismsDiffer>false</organismsDiffer>
    <experiments>4</experiments>
</comment>
<comment type="interaction">
    <interactant intactId="EBI-352572">
        <id>P08238</id>
    </interactant>
    <interactant intactId="EBI-350672">
        <id>Q8WXR4</id>
        <label>MYO3B</label>
    </interactant>
    <organismsDiffer>false</organismsDiffer>
    <experiments>2</experiments>
</comment>
<comment type="interaction">
    <interactant intactId="EBI-352572">
        <id>P08238</id>
    </interactant>
    <interactant intactId="EBI-633195">
        <id>Q8NG66</id>
        <label>NEK11</label>
    </interactant>
    <organismsDiffer>false</organismsDiffer>
    <experiments>2</experiments>
</comment>
<comment type="interaction">
    <interactant intactId="EBI-352572">
        <id>P08238</id>
    </interactant>
    <interactant intactId="EBI-1752987">
        <id>Q86SG6</id>
        <label>NEK8</label>
    </interactant>
    <organismsDiffer>false</organismsDiffer>
    <experiments>2</experiments>
</comment>
<comment type="interaction">
    <interactant intactId="EBI-352572">
        <id>P08238</id>
    </interactant>
    <interactant intactId="EBI-1044009">
        <id>Q8TD19</id>
        <label>NEK9</label>
    </interactant>
    <organismsDiffer>false</organismsDiffer>
    <experiments>2</experiments>
</comment>
<comment type="interaction">
    <interactant intactId="EBI-352572">
        <id>P08238</id>
    </interactant>
    <interactant intactId="EBI-3905991">
        <id>O75469</id>
        <label>NR1I2</label>
    </interactant>
    <organismsDiffer>false</organismsDiffer>
    <experiments>2</experiments>
</comment>
<comment type="interaction">
    <interactant intactId="EBI-352572">
        <id>P08238</id>
    </interactant>
    <interactant intactId="EBI-1028226">
        <id>P04629</id>
        <label>NTRK1</label>
    </interactant>
    <organismsDiffer>false</organismsDiffer>
    <experiments>3</experiments>
</comment>
<comment type="interaction">
    <interactant intactId="EBI-352572">
        <id>P08238</id>
    </interactant>
    <interactant intactId="EBI-6423298">
        <id>Q8N165</id>
        <label>PDIK1L</label>
    </interactant>
    <organismsDiffer>false</organismsDiffer>
    <experiments>4</experiments>
</comment>
<comment type="interaction">
    <interactant intactId="EBI-352572">
        <id>P08238</id>
    </interactant>
    <interactant intactId="EBI-2846068">
        <id>Q9BXM7</id>
        <label>PINK1</label>
    </interactant>
    <organismsDiffer>false</organismsDiffer>
    <experiments>3</experiments>
</comment>
<comment type="interaction">
    <interactant intactId="EBI-352572">
        <id>P08238</id>
    </interactant>
    <interactant intactId="EBI-2555775">
        <id>Q9P215</id>
        <label>POGK</label>
    </interactant>
    <organismsDiffer>false</organismsDiffer>
    <experiments>2</experiments>
</comment>
<comment type="interaction">
    <interactant intactId="EBI-352572">
        <id>P08238</id>
    </interactant>
    <interactant intactId="EBI-716663">
        <id>P53041</id>
        <label>PPP5C</label>
    </interactant>
    <organismsDiffer>false</organismsDiffer>
    <experiments>9</experiments>
</comment>
<comment type="interaction">
    <interactant intactId="EBI-352572">
        <id>P08238</id>
    </interactant>
    <interactant intactId="EBI-1181405">
        <id>Q13131</id>
        <label>PRKAA1</label>
    </interactant>
    <organismsDiffer>false</organismsDiffer>
    <experiments>2</experiments>
</comment>
<comment type="interaction">
    <interactant intactId="EBI-352572">
        <id>P08238</id>
    </interactant>
    <interactant intactId="EBI-2679622">
        <id>P22694</id>
        <label>PRKACB</label>
    </interactant>
    <organismsDiffer>false</organismsDiffer>
    <experiments>2</experiments>
</comment>
<comment type="interaction">
    <interactant intactId="EBI-352572">
        <id>P08238</id>
    </interactant>
    <interactant intactId="EBI-706254">
        <id>Q02156</id>
        <label>PRKCE</label>
    </interactant>
    <organismsDiffer>false</organismsDiffer>
    <experiments>4</experiments>
</comment>
<comment type="interaction">
    <interactant intactId="EBI-352572">
        <id>P08238</id>
    </interactant>
    <interactant intactId="EBI-949799">
        <id>P05129</id>
        <label>PRKCG</label>
    </interactant>
    <organismsDiffer>false</organismsDiffer>
    <experiments>2</experiments>
</comment>
<comment type="interaction">
    <interactant intactId="EBI-352572">
        <id>P08238</id>
    </interactant>
    <interactant intactId="EBI-295351">
        <id>Q05513</id>
        <label>PRKCZ</label>
    </interactant>
    <organismsDiffer>false</organismsDiffer>
    <experiments>2</experiments>
</comment>
<comment type="interaction">
    <interactant intactId="EBI-352572">
        <id>P08238</id>
    </interactant>
    <interactant intactId="EBI-1181072">
        <id>Q15139</id>
        <label>PRKD1</label>
    </interactant>
    <organismsDiffer>false</organismsDiffer>
    <experiments>2</experiments>
</comment>
<comment type="interaction">
    <interactant intactId="EBI-352572">
        <id>P08238</id>
    </interactant>
    <interactant intactId="EBI-716346">
        <id>O60260</id>
        <label>PRKN</label>
    </interactant>
    <organismsDiffer>false</organismsDiffer>
    <experiments>2</experiments>
</comment>
<comment type="interaction">
    <interactant intactId="EBI-352572">
        <id>P08238</id>
    </interactant>
    <interactant intactId="EBI-4302903">
        <id>P51817</id>
        <label>PRKX</label>
    </interactant>
    <organismsDiffer>false</organismsDiffer>
    <experiments>3</experiments>
</comment>
<comment type="interaction">
    <interactant intactId="EBI-352572">
        <id>P08238</id>
    </interactant>
    <interactant intactId="EBI-3922781">
        <id>P11801</id>
        <label>PSKH1</label>
    </interactant>
    <organismsDiffer>false</organismsDiffer>
    <experiments>3</experiments>
</comment>
<comment type="interaction">
    <interactant intactId="EBI-352572">
        <id>P08238</id>
    </interactant>
    <interactant intactId="EBI-6424813">
        <id>Q96QS6</id>
        <label>PSKH2</label>
    </interactant>
    <organismsDiffer>false</organismsDiffer>
    <experiments>4</experiments>
</comment>
<comment type="interaction">
    <interactant intactId="EBI-352572">
        <id>P08238</id>
    </interactant>
    <interactant intactId="EBI-1049387">
        <id>Q15185</id>
        <label>PTGES3</label>
    </interactant>
    <organismsDiffer>false</organismsDiffer>
    <experiments>7</experiments>
</comment>
<comment type="interaction">
    <interactant intactId="EBI-352572">
        <id>P08238</id>
    </interactant>
    <interactant intactId="EBI-1383632">
        <id>Q13882</id>
        <label>PTK6</label>
    </interactant>
    <organismsDiffer>false</organismsDiffer>
    <experiments>3</experiments>
</comment>
<comment type="interaction">
    <interactant intactId="EBI-352572">
        <id>P08238</id>
    </interactant>
    <interactant intactId="EBI-365996">
        <id>P04049</id>
        <label>RAF1</label>
    </interactant>
    <organismsDiffer>false</organismsDiffer>
    <experiments>17</experiments>
</comment>
<comment type="interaction">
    <interactant intactId="EBI-352572">
        <id>P08238</id>
    </interactant>
    <interactant intactId="EBI-6426927">
        <id>P49758</id>
        <label>RGS6</label>
    </interactant>
    <organismsDiffer>false</organismsDiffer>
    <experiments>2</experiments>
</comment>
<comment type="interaction">
    <interactant intactId="EBI-352572">
        <id>P08238</id>
    </interactant>
    <interactant intactId="EBI-6422642">
        <id>Q01974</id>
        <label>ROR2</label>
    </interactant>
    <organismsDiffer>false</organismsDiffer>
    <experiments>2</experiments>
</comment>
<comment type="interaction">
    <interactant intactId="EBI-352572">
        <id>P08238</id>
    </interactant>
    <interactant intactId="EBI-356928">
        <id>Q9H6T3</id>
        <label>RPAP3</label>
    </interactant>
    <organismsDiffer>false</organismsDiffer>
    <experiments>2</experiments>
</comment>
<comment type="interaction">
    <interactant intactId="EBI-352572">
        <id>P08238</id>
    </interactant>
    <interactant intactId="EBI-354380">
        <id>P62913</id>
        <label>RPL11</label>
    </interactant>
    <organismsDiffer>false</organismsDiffer>
    <experiments>2</experiments>
</comment>
<comment type="interaction">
    <interactant intactId="EBI-352572">
        <id>P08238</id>
    </interactant>
    <interactant intactId="EBI-963034">
        <id>Q15418</id>
        <label>RPS6KA1</label>
    </interactant>
    <organismsDiffer>false</organismsDiffer>
    <experiments>4</experiments>
</comment>
<comment type="interaction">
    <interactant intactId="EBI-352572">
        <id>P08238</id>
    </interactant>
    <interactant intactId="EBI-1046616">
        <id>P51812</id>
        <label>RPS6KA3</label>
    </interactant>
    <organismsDiffer>false</organismsDiffer>
    <experiments>3</experiments>
</comment>
<comment type="interaction">
    <interactant intactId="EBI-352572">
        <id>P08238</id>
    </interactant>
    <interactant intactId="EBI-3914329">
        <id>Q9HBY8</id>
        <label>SGK2</label>
    </interactant>
    <organismsDiffer>false</organismsDiffer>
    <experiments>3</experiments>
</comment>
<comment type="interaction">
    <interactant intactId="EBI-352572">
        <id>P08238</id>
    </interactant>
    <interactant intactId="EBI-1054052">
        <id>P31948</id>
        <label>STIP1</label>
    </interactant>
    <organismsDiffer>false</organismsDiffer>
    <experiments>6</experiments>
</comment>
<comment type="interaction">
    <interactant intactId="EBI-352572">
        <id>P08238</id>
    </interactant>
    <interactant intactId="EBI-306838">
        <id>Q15831</id>
        <label>STK11</label>
    </interactant>
    <organismsDiffer>false</organismsDiffer>
    <experiments>8</experiments>
</comment>
<comment type="interaction">
    <interactant intactId="EBI-352572">
        <id>P08238</id>
    </interactant>
    <interactant intactId="EBI-1050045">
        <id>Q86UX6</id>
        <label>STK32C</label>
    </interactant>
    <organismsDiffer>false</organismsDiffer>
    <experiments>2</experiments>
</comment>
<comment type="interaction">
    <interactant intactId="EBI-352572">
        <id>P08238</id>
    </interactant>
    <interactant intactId="EBI-458376">
        <id>Q15208</id>
        <label>STK38</label>
    </interactant>
    <organismsDiffer>false</organismsDiffer>
    <experiments>2</experiments>
</comment>
<comment type="interaction">
    <interactant intactId="EBI-352572">
        <id>P08238</id>
    </interactant>
    <interactant intactId="EBI-357085">
        <id>Q9UNE7</id>
        <label>STUB1</label>
    </interactant>
    <organismsDiffer>false</organismsDiffer>
    <experiments>5</experiments>
</comment>
<comment type="interaction">
    <interactant intactId="EBI-352572">
        <id>P08238</id>
    </interactant>
    <interactant intactId="EBI-6424915">
        <id>Q6J9G0</id>
        <label>STYK1</label>
    </interactant>
    <organismsDiffer>false</organismsDiffer>
    <experiments>3</experiments>
</comment>
<comment type="interaction">
    <interactant intactId="EBI-352572">
        <id>P08238</id>
    </interactant>
    <interactant intactId="EBI-10768076">
        <id>Q9Y2Z0-2</id>
        <label>SUGT1</label>
    </interactant>
    <organismsDiffer>false</organismsDiffer>
    <experiments>2</experiments>
</comment>
<comment type="interaction">
    <interactant intactId="EBI-352572">
        <id>P08238</id>
    </interactant>
    <interactant intactId="EBI-356402">
        <id>Q9UHD2</id>
        <label>TBK1</label>
    </interactant>
    <organismsDiffer>false</organismsDiffer>
    <experiments>2</experiments>
</comment>
<comment type="interaction">
    <interactant intactId="EBI-352572">
        <id>P08238</id>
    </interactant>
    <interactant intactId="EBI-1384110">
        <id>Q96S53</id>
        <label>TESK2</label>
    </interactant>
    <organismsDiffer>false</organismsDiffer>
    <experiments>3</experiments>
</comment>
<comment type="interaction">
    <interactant intactId="EBI-352572">
        <id>P08238</id>
    </interactant>
    <interactant intactId="EBI-603457">
        <id>Q07912</id>
        <label>TNK2</label>
    </interactant>
    <organismsDiffer>false</organismsDiffer>
    <experiments>3</experiments>
</comment>
<comment type="interaction">
    <interactant intactId="EBI-352572">
        <id>P08238</id>
    </interactant>
    <interactant intactId="EBI-6423734">
        <id>Q9BXA7</id>
        <label>TSSK1B</label>
    </interactant>
    <organismsDiffer>false</organismsDiffer>
    <experiments>2</experiments>
</comment>
<comment type="interaction">
    <interactant intactId="EBI-352572">
        <id>P08238</id>
    </interactant>
    <interactant intactId="EBI-852089">
        <id>Q96PF2</id>
        <label>TSSK2</label>
    </interactant>
    <organismsDiffer>false</organismsDiffer>
    <experiments>2</experiments>
</comment>
<comment type="interaction">
    <interactant intactId="EBI-352572">
        <id>P08238</id>
    </interactant>
    <interactant intactId="EBI-851883">
        <id>Q9BXA6</id>
        <label>TSSK6</label>
    </interactant>
    <organismsDiffer>false</organismsDiffer>
    <experiments>6</experiments>
</comment>
<comment type="interaction">
    <interactant intactId="EBI-352572">
        <id>P08238</id>
    </interactant>
    <interactant intactId="EBI-1050890">
        <id>O95801</id>
        <label>TTC4</label>
    </interactant>
    <organismsDiffer>false</organismsDiffer>
    <experiments>5</experiments>
</comment>
<comment type="interaction">
    <interactant intactId="EBI-352572">
        <id>P08238</id>
    </interactant>
    <interactant intactId="EBI-1383454">
        <id>P29597</id>
        <label>TYK2</label>
    </interactant>
    <organismsDiffer>false</organismsDiffer>
    <experiments>2</experiments>
</comment>
<comment type="interaction">
    <interactant intactId="EBI-352572">
        <id>P08238</id>
    </interactant>
    <interactant intactId="EBI-3951628">
        <id>Q06418</id>
        <label>TYRO3</label>
    </interactant>
    <organismsDiffer>false</organismsDiffer>
    <experiments>2</experiments>
</comment>
<comment type="interaction">
    <interactant intactId="EBI-352572">
        <id>P08238</id>
    </interactant>
    <interactant intactId="EBI-9363363">
        <id>Q8IWX7</id>
        <label>UNC45B</label>
    </interactant>
    <organismsDiffer>false</organismsDiffer>
    <experiments>4</experiments>
</comment>
<comment type="interaction">
    <interactant intactId="EBI-352572">
        <id>P08238</id>
    </interactant>
    <interactant intactId="EBI-515331">
        <id>P07947</id>
        <label>YES1</label>
    </interactant>
    <organismsDiffer>false</organismsDiffer>
    <experiments>3</experiments>
</comment>
<comment type="subcellular location">
    <subcellularLocation>
        <location evidence="12 15 34 40">Cytoplasm</location>
    </subcellularLocation>
    <subcellularLocation>
        <location evidence="13">Melanosome</location>
    </subcellularLocation>
    <subcellularLocation>
        <location evidence="15">Nucleus</location>
    </subcellularLocation>
    <subcellularLocation>
        <location evidence="21">Secreted</location>
    </subcellularLocation>
    <subcellularLocation>
        <location evidence="21">Cell membrane</location>
    </subcellularLocation>
    <subcellularLocation>
        <location evidence="5">Dynein axonemal particle</location>
    </subcellularLocation>
    <subcellularLocation>
        <location evidence="23">Cell surface</location>
    </subcellularLocation>
    <text evidence="13 15 21">Identified by mass spectrometry in melanosome fractions from stage I to stage IV (PubMed:17081065). Translocates with BIRC2 from the nucleus to the cytoplasm during differentiation (PubMed:18239673). Secreted when associated with TGFB1 processed form (LAP) (PubMed:20599762).</text>
</comment>
<comment type="induction">
    <text evidence="20">By heat shock.</text>
</comment>
<comment type="domain">
    <text evidence="2">The TPR repeat-binding motif mediates interaction with TPR repeat-containing proteins.</text>
</comment>
<comment type="PTM">
    <text evidence="14">Ubiquitinated in the presence of STUB1-UBE2D1 complex (in vitro).</text>
</comment>
<comment type="PTM">
    <text evidence="10">ISGylated.</text>
</comment>
<comment type="PTM">
    <text evidence="47">S-nitrosylated; negatively regulates the ATPase activity.</text>
</comment>
<comment type="PTM">
    <text evidence="9 31">Phosphorylation at Tyr-301 by SRC is induced by lipopolysaccharide (PubMed:23585225). Phosphorylation at Ser-226 and Ser-255 inhibits AHR interaction (PubMed:15581363).</text>
</comment>
<comment type="PTM">
    <text evidence="34">Methylated by SMYD2; facilitates dimerization and chaperone complex formation; promotes cancer cell proliferation.</text>
</comment>
<comment type="PTM">
    <text evidence="28">Cleaved following oxidative stress resulting in HSP90AB1 protein radicals formation; disrupts the chaperoning function and the degradation of its client proteins.</text>
</comment>
<comment type="similarity">
    <text evidence="46">Belongs to the heat shock protein 90 family.</text>
</comment>
<comment type="sequence caution" evidence="46">
    <conflict type="erroneous initiation">
        <sequence resource="EMBL-CDS" id="AAD14062"/>
    </conflict>
    <text>Truncated N-terminus.</text>
</comment>
<comment type="sequence caution" evidence="46">
    <conflict type="frameshift">
        <sequence resource="EMBL-CDS" id="CAB66478"/>
    </conflict>
</comment>
<dbReference type="EMBL" id="M16660">
    <property type="protein sequence ID" value="AAA36025.1"/>
    <property type="molecule type" value="mRNA"/>
</dbReference>
<dbReference type="EMBL" id="J04988">
    <property type="protein sequence ID" value="AAA36026.1"/>
    <property type="molecule type" value="Genomic_DNA"/>
</dbReference>
<dbReference type="EMBL" id="AY359878">
    <property type="protein sequence ID" value="AAQ63401.1"/>
    <property type="molecule type" value="mRNA"/>
</dbReference>
<dbReference type="EMBL" id="AL136543">
    <property type="protein sequence ID" value="CAB66478.1"/>
    <property type="status" value="ALT_FRAME"/>
    <property type="molecule type" value="mRNA"/>
</dbReference>
<dbReference type="EMBL" id="AK312255">
    <property type="protein sequence ID" value="BAG35187.1"/>
    <property type="molecule type" value="mRNA"/>
</dbReference>
<dbReference type="EMBL" id="DQ314872">
    <property type="protein sequence ID" value="ABC40731.1"/>
    <property type="molecule type" value="Genomic_DNA"/>
</dbReference>
<dbReference type="EMBL" id="AL139392">
    <property type="status" value="NOT_ANNOTATED_CDS"/>
    <property type="molecule type" value="Genomic_DNA"/>
</dbReference>
<dbReference type="EMBL" id="CH471081">
    <property type="protein sequence ID" value="EAX04257.1"/>
    <property type="molecule type" value="Genomic_DNA"/>
</dbReference>
<dbReference type="EMBL" id="BC004928">
    <property type="protein sequence ID" value="AAH04928.1"/>
    <property type="molecule type" value="mRNA"/>
</dbReference>
<dbReference type="EMBL" id="BC009206">
    <property type="protein sequence ID" value="AAH09206.2"/>
    <property type="molecule type" value="mRNA"/>
</dbReference>
<dbReference type="EMBL" id="BC012807">
    <property type="protein sequence ID" value="AAH12807.1"/>
    <property type="molecule type" value="mRNA"/>
</dbReference>
<dbReference type="EMBL" id="BC014485">
    <property type="protein sequence ID" value="AAH14485.1"/>
    <property type="molecule type" value="mRNA"/>
</dbReference>
<dbReference type="EMBL" id="BC016753">
    <property type="protein sequence ID" value="AAH16753.1"/>
    <property type="molecule type" value="mRNA"/>
</dbReference>
<dbReference type="EMBL" id="BC068474">
    <property type="protein sequence ID" value="AAH68474.1"/>
    <property type="molecule type" value="mRNA"/>
</dbReference>
<dbReference type="EMBL" id="AH007358">
    <property type="protein sequence ID" value="AAD14062.3"/>
    <property type="status" value="ALT_INIT"/>
    <property type="molecule type" value="Genomic_DNA"/>
</dbReference>
<dbReference type="EMBL" id="AF275719">
    <property type="protein sequence ID" value="AAF82792.1"/>
    <property type="molecule type" value="mRNA"/>
</dbReference>
<dbReference type="CCDS" id="CCDS4909.1"/>
<dbReference type="PIR" id="A29461">
    <property type="entry name" value="HHHU84"/>
</dbReference>
<dbReference type="PIR" id="T46243">
    <property type="entry name" value="T46243"/>
</dbReference>
<dbReference type="RefSeq" id="NP_001258898.1">
    <property type="nucleotide sequence ID" value="NM_001271969.2"/>
</dbReference>
<dbReference type="RefSeq" id="NP_001258899.1">
    <property type="nucleotide sequence ID" value="NM_001271970.2"/>
</dbReference>
<dbReference type="RefSeq" id="NP_001258900.1">
    <property type="nucleotide sequence ID" value="NM_001271971.1"/>
</dbReference>
<dbReference type="RefSeq" id="NP_001358167.1">
    <property type="nucleotide sequence ID" value="NM_001371238.1"/>
</dbReference>
<dbReference type="RefSeq" id="NP_031381.2">
    <property type="nucleotide sequence ID" value="NM_007355.3"/>
</dbReference>
<dbReference type="PDB" id="1QZ2">
    <property type="method" value="X-ray"/>
    <property type="resolution" value="3.00 A"/>
    <property type="chains" value="G/H=720-724"/>
</dbReference>
<dbReference type="PDB" id="1UYM">
    <property type="method" value="X-ray"/>
    <property type="resolution" value="2.45 A"/>
    <property type="chains" value="A=2-221"/>
</dbReference>
<dbReference type="PDB" id="2L6J">
    <property type="method" value="NMR"/>
    <property type="chains" value="B=720-724"/>
</dbReference>
<dbReference type="PDB" id="3FWV">
    <property type="method" value="X-ray"/>
    <property type="resolution" value="2.20 A"/>
    <property type="chains" value="C/D=719-723"/>
</dbReference>
<dbReference type="PDB" id="3NMQ">
    <property type="method" value="X-ray"/>
    <property type="resolution" value="2.20 A"/>
    <property type="chains" value="A=1-223"/>
</dbReference>
<dbReference type="PDB" id="3PRY">
    <property type="method" value="X-ray"/>
    <property type="resolution" value="2.28 A"/>
    <property type="chains" value="A/B/C=284-543"/>
</dbReference>
<dbReference type="PDB" id="3UQ3">
    <property type="method" value="X-ray"/>
    <property type="resolution" value="2.60 A"/>
    <property type="chains" value="B/C=720-724"/>
</dbReference>
<dbReference type="PDB" id="5FWK">
    <property type="method" value="EM"/>
    <property type="resolution" value="3.90 A"/>
    <property type="chains" value="A/B=1-724"/>
</dbReference>
<dbReference type="PDB" id="5FWL">
    <property type="method" value="EM"/>
    <property type="resolution" value="9.00 A"/>
    <property type="chains" value="A/B=1-724"/>
</dbReference>
<dbReference type="PDB" id="5FWM">
    <property type="method" value="EM"/>
    <property type="resolution" value="8.00 A"/>
    <property type="chains" value="A/B=1-724"/>
</dbReference>
<dbReference type="PDB" id="5FWP">
    <property type="method" value="EM"/>
    <property type="resolution" value="7.20 A"/>
    <property type="chains" value="A/B=1-724"/>
</dbReference>
<dbReference type="PDB" id="5UC4">
    <property type="method" value="X-ray"/>
    <property type="resolution" value="2.05 A"/>
    <property type="chains" value="A/B/C/D=1-218"/>
</dbReference>
<dbReference type="PDB" id="5UCH">
    <property type="method" value="X-ray"/>
    <property type="resolution" value="2.65 A"/>
    <property type="chains" value="A/B/C/D=1-218"/>
</dbReference>
<dbReference type="PDB" id="5UCI">
    <property type="method" value="X-ray"/>
    <property type="resolution" value="2.70 A"/>
    <property type="chains" value="A/B/C/D=1-218"/>
</dbReference>
<dbReference type="PDB" id="5UCJ">
    <property type="method" value="X-ray"/>
    <property type="resolution" value="1.69 A"/>
    <property type="chains" value="A/B/C/D=1-218"/>
</dbReference>
<dbReference type="PDB" id="6N8W">
    <property type="method" value="X-ray"/>
    <property type="resolution" value="3.09 A"/>
    <property type="chains" value="A/B/C/D=1-231"/>
</dbReference>
<dbReference type="PDB" id="6N8Y">
    <property type="method" value="X-ray"/>
    <property type="resolution" value="1.55 A"/>
    <property type="chains" value="A=1-221"/>
</dbReference>
<dbReference type="PDB" id="7ULJ">
    <property type="method" value="X-ray"/>
    <property type="resolution" value="1.82 A"/>
    <property type="chains" value="A/B/C/D=1-218"/>
</dbReference>
<dbReference type="PDB" id="7Z37">
    <property type="method" value="EM"/>
    <property type="resolution" value="3.67 A"/>
    <property type="chains" value="AP1/BP1=3-724"/>
</dbReference>
<dbReference type="PDB" id="7Z38">
    <property type="method" value="EM"/>
    <property type="resolution" value="3.16 A"/>
    <property type="chains" value="A/B=3-724"/>
</dbReference>
<dbReference type="PDB" id="7ZR0">
    <property type="method" value="EM"/>
    <property type="resolution" value="3.40 A"/>
    <property type="chains" value="A/B=1-724"/>
</dbReference>
<dbReference type="PDB" id="7ZR5">
    <property type="method" value="EM"/>
    <property type="resolution" value="3.90 A"/>
    <property type="chains" value="A/B=1-724"/>
</dbReference>
<dbReference type="PDB" id="7ZR6">
    <property type="method" value="EM"/>
    <property type="resolution" value="4.20 A"/>
    <property type="chains" value="A/B=1-724"/>
</dbReference>
<dbReference type="PDB" id="7ZUB">
    <property type="method" value="EM"/>
    <property type="resolution" value="2.85 A"/>
    <property type="chains" value="A/B=2-724"/>
</dbReference>
<dbReference type="PDB" id="8EOA">
    <property type="method" value="EM"/>
    <property type="resolution" value="3.90 A"/>
    <property type="chains" value="A/B=2-724"/>
</dbReference>
<dbReference type="PDB" id="8EOB">
    <property type="method" value="EM"/>
    <property type="resolution" value="3.10 A"/>
    <property type="chains" value="A/B=2-724"/>
</dbReference>
<dbReference type="PDB" id="8GAE">
    <property type="method" value="EM"/>
    <property type="resolution" value="3.30 A"/>
    <property type="chains" value="A/B=1-724"/>
</dbReference>
<dbReference type="PDB" id="8GFT">
    <property type="method" value="EM"/>
    <property type="resolution" value="3.80 A"/>
    <property type="chains" value="A/B=1-724"/>
</dbReference>
<dbReference type="PDB" id="8QMO">
    <property type="method" value="EM"/>
    <property type="resolution" value="2.76 A"/>
    <property type="chains" value="A/B=2-724"/>
</dbReference>
<dbReference type="PDBsum" id="1QZ2"/>
<dbReference type="PDBsum" id="1UYM"/>
<dbReference type="PDBsum" id="2L6J"/>
<dbReference type="PDBsum" id="3FWV"/>
<dbReference type="PDBsum" id="3NMQ"/>
<dbReference type="PDBsum" id="3PRY"/>
<dbReference type="PDBsum" id="3UQ3"/>
<dbReference type="PDBsum" id="5FWK"/>
<dbReference type="PDBsum" id="5FWL"/>
<dbReference type="PDBsum" id="5FWM"/>
<dbReference type="PDBsum" id="5FWP"/>
<dbReference type="PDBsum" id="5UC4"/>
<dbReference type="PDBsum" id="5UCH"/>
<dbReference type="PDBsum" id="5UCI"/>
<dbReference type="PDBsum" id="5UCJ"/>
<dbReference type="PDBsum" id="6N8W"/>
<dbReference type="PDBsum" id="6N8Y"/>
<dbReference type="PDBsum" id="7ULJ"/>
<dbReference type="PDBsum" id="7Z37"/>
<dbReference type="PDBsum" id="7Z38"/>
<dbReference type="PDBsum" id="7ZR0"/>
<dbReference type="PDBsum" id="7ZR5"/>
<dbReference type="PDBsum" id="7ZR6"/>
<dbReference type="PDBsum" id="7ZUB"/>
<dbReference type="PDBsum" id="8EOA"/>
<dbReference type="PDBsum" id="8EOB"/>
<dbReference type="PDBsum" id="8GAE"/>
<dbReference type="PDBsum" id="8GFT"/>
<dbReference type="PDBsum" id="8QMO"/>
<dbReference type="EMDB" id="EMD-14472"/>
<dbReference type="EMDB" id="EMD-14473"/>
<dbReference type="EMDB" id="EMD-14875"/>
<dbReference type="EMDB" id="EMD-14883"/>
<dbReference type="EMDB" id="EMD-14884"/>
<dbReference type="EMDB" id="EMD-14971"/>
<dbReference type="EMDB" id="EMD-18498"/>
<dbReference type="EMDB" id="EMD-28332"/>
<dbReference type="EMDB" id="EMD-28333"/>
<dbReference type="EMDB" id="EMD-29895"/>
<dbReference type="EMDB" id="EMD-29984"/>
<dbReference type="EMDB" id="EMD-3337"/>
<dbReference type="EMDB" id="EMD-3338"/>
<dbReference type="EMDB" id="EMD-3339"/>
<dbReference type="EMDB" id="EMD-3340"/>
<dbReference type="EMDB" id="EMD-3341"/>
<dbReference type="EMDB" id="EMD-3342"/>
<dbReference type="EMDB" id="EMD-3343"/>
<dbReference type="EMDB" id="EMD-3344"/>
<dbReference type="SMR" id="P08238"/>
<dbReference type="BioGRID" id="109558">
    <property type="interactions" value="975"/>
</dbReference>
<dbReference type="ComplexPortal" id="CPX-3285">
    <property type="entry name" value="HSP90B-CDC37 chaperone complex"/>
</dbReference>
<dbReference type="CORUM" id="P08238"/>
<dbReference type="DIP" id="DIP-413N"/>
<dbReference type="FunCoup" id="P08238">
    <property type="interactions" value="2862"/>
</dbReference>
<dbReference type="IntAct" id="P08238">
    <property type="interactions" value="640"/>
</dbReference>
<dbReference type="MINT" id="P08238"/>
<dbReference type="STRING" id="9606.ENSP00000360609"/>
<dbReference type="BindingDB" id="P08238"/>
<dbReference type="ChEMBL" id="CHEMBL4303"/>
<dbReference type="DrugBank" id="DB08293">
    <property type="generic name" value="(5E)-12-CHLORO-13,15-DIHYDROXY-4,7,8,9-TETRAHYDRO-2-BENZOXACYCLOTRIDECINE-1,10(3H,11H)-DIONE"/>
</dbReference>
<dbReference type="DrugBank" id="DB08153">
    <property type="generic name" value="(5E)-14-CHLORO-15,17-DIHYDROXY-4,7,8,9,10,11-HEXAHYDRO-2-BENZOXACYCLOPENTADECINE-1,12(3H,13H)-DIONE"/>
</dbReference>
<dbReference type="DrugBank" id="DB08292">
    <property type="generic name" value="(5Z)-12-CHLORO-13,15-DIHYDROXY-4,7,8,9-TETRAHYDRO-2-BENZOXACYCLOTRIDECINE-1,10(3H,11H)-DIONE"/>
</dbReference>
<dbReference type="DrugBank" id="DB08346">
    <property type="generic name" value="(5Z)-13-CHLORO-14,16-DIHYDROXY-3,4,7,8,9,10-HEXAHYDRO-1H-2-BENZOXACYCLOTETRADECINE-1,11(12H)-DIONE"/>
</dbReference>
<dbReference type="DrugBank" id="DB08465">
    <property type="generic name" value="2-(3-AMINO-2,5,6-TRIMETHOXYPHENYL)ETHYL 5-CHLORO-2,4-DIHYDROXYBENZOATE"/>
</dbReference>
<dbReference type="DrugBank" id="DB08045">
    <property type="generic name" value="4-{4-[4-(3-AMINOPROPOXY)PHENYL]-1H-PYRAZOL-5-YL}-6-CHLOROBENZENE-1,3-DIOL"/>
</dbReference>
<dbReference type="DrugBank" id="DB07877">
    <property type="generic name" value="8-(6-BROMO-BENZO[1,3]DIOXOL-5-YLSULFANYL)-9-(3-ISOPROPYLAMINO-PROPYL)-ADENINE"/>
</dbReference>
<dbReference type="DrugBank" id="DB02754">
    <property type="generic name" value="9-Butyl-8-(3,4,5-Trimethoxybenzyl)-9h-Purin-6-Amine"/>
</dbReference>
<dbReference type="DrugBank" id="DB07594">
    <property type="generic name" value="CCT-018159"/>
</dbReference>
<dbReference type="DrugBank" id="DB02424">
    <property type="generic name" value="Geldanamycin"/>
</dbReference>
<dbReference type="DrugBank" id="DB08464">
    <property type="generic name" value="METHYL 3-CHLORO-2-{3-[(2,5-DIHYDROXY-4-METHOXYPHENYL)AMINO]-3-OXOPROPYL}-4,6-DIHYDROXYBENZOATE"/>
</dbReference>
<dbReference type="DrugBank" id="DB09221">
    <property type="generic name" value="Polaprezinc"/>
</dbReference>
<dbReference type="DrugBank" id="DB03758">
    <property type="generic name" value="Radicicol"/>
</dbReference>
<dbReference type="DrugBank" id="DB06070">
    <property type="generic name" value="SNX-5422"/>
</dbReference>
<dbReference type="DrugBank" id="DB05134">
    <property type="generic name" value="Tanespimycin"/>
</dbReference>
<dbReference type="DrugBank" id="DB14876">
    <property type="generic name" value="TAS-116"/>
</dbReference>
<dbReference type="DrugBank" id="DB12638">
    <property type="generic name" value="Zelavespib"/>
</dbReference>
<dbReference type="DrugCentral" id="P08238"/>
<dbReference type="GuidetoPHARMACOLOGY" id="2907"/>
<dbReference type="MoonDB" id="P08238">
    <property type="type" value="Predicted"/>
</dbReference>
<dbReference type="TCDB" id="8.A.163.1.1">
    <property type="family name" value="the hsp90/cdc37 (hsp90/cdc37) family"/>
</dbReference>
<dbReference type="CarbonylDB" id="P08238"/>
<dbReference type="GlyConnect" id="1302">
    <property type="glycosylation" value="2 N-Linked glycans (2 sites)"/>
</dbReference>
<dbReference type="GlyCosmos" id="P08238">
    <property type="glycosylation" value="5 sites, 4 glycans"/>
</dbReference>
<dbReference type="GlyGen" id="P08238">
    <property type="glycosylation" value="6 sites, 4 N-linked glycans (3 sites), 2 O-linked glycans (1 site)"/>
</dbReference>
<dbReference type="iPTMnet" id="P08238"/>
<dbReference type="MetOSite" id="P08238"/>
<dbReference type="PhosphoSitePlus" id="P08238"/>
<dbReference type="SwissPalm" id="P08238"/>
<dbReference type="BioMuta" id="HSP90AB1"/>
<dbReference type="DMDM" id="17865718"/>
<dbReference type="OGP" id="P08238"/>
<dbReference type="jPOST" id="P08238"/>
<dbReference type="MassIVE" id="P08238"/>
<dbReference type="PaxDb" id="9606-ENSP00000360609"/>
<dbReference type="PeptideAtlas" id="P08238"/>
<dbReference type="PRIDE" id="P08238"/>
<dbReference type="ProteomicsDB" id="52096"/>
<dbReference type="Pumba" id="P08238"/>
<dbReference type="TopDownProteomics" id="P08238"/>
<dbReference type="ABCD" id="P08238">
    <property type="antibodies" value="1 sequenced antibody"/>
</dbReference>
<dbReference type="Antibodypedia" id="3929">
    <property type="antibodies" value="1670 antibodies from 47 providers"/>
</dbReference>
<dbReference type="DNASU" id="3326"/>
<dbReference type="Ensembl" id="ENST00000353801.7">
    <property type="protein sequence ID" value="ENSP00000325875.3"/>
    <property type="gene ID" value="ENSG00000096384.20"/>
</dbReference>
<dbReference type="Ensembl" id="ENST00000371554.2">
    <property type="protein sequence ID" value="ENSP00000360609.1"/>
    <property type="gene ID" value="ENSG00000096384.20"/>
</dbReference>
<dbReference type="Ensembl" id="ENST00000371646.10">
    <property type="protein sequence ID" value="ENSP00000360709.5"/>
    <property type="gene ID" value="ENSG00000096384.20"/>
</dbReference>
<dbReference type="Ensembl" id="ENST00000620073.4">
    <property type="protein sequence ID" value="ENSP00000481908.1"/>
    <property type="gene ID" value="ENSG00000096384.20"/>
</dbReference>
<dbReference type="GeneID" id="3326"/>
<dbReference type="KEGG" id="hsa:3326"/>
<dbReference type="MANE-Select" id="ENST00000371646.10">
    <property type="protein sequence ID" value="ENSP00000360709.5"/>
    <property type="RefSeq nucleotide sequence ID" value="NM_007355.4"/>
    <property type="RefSeq protein sequence ID" value="NP_031381.2"/>
</dbReference>
<dbReference type="UCSC" id="uc003oxa.3">
    <property type="organism name" value="human"/>
</dbReference>
<dbReference type="AGR" id="HGNC:5258"/>
<dbReference type="CTD" id="3326"/>
<dbReference type="DisGeNET" id="3326"/>
<dbReference type="GeneCards" id="HSP90AB1"/>
<dbReference type="HGNC" id="HGNC:5258">
    <property type="gene designation" value="HSP90AB1"/>
</dbReference>
<dbReference type="HPA" id="ENSG00000096384">
    <property type="expression patterns" value="Low tissue specificity"/>
</dbReference>
<dbReference type="MalaCards" id="HSP90AB1"/>
<dbReference type="MIM" id="140572">
    <property type="type" value="gene"/>
</dbReference>
<dbReference type="neXtProt" id="NX_P08238"/>
<dbReference type="OpenTargets" id="ENSG00000096384"/>
<dbReference type="PharmGKB" id="PA29524"/>
<dbReference type="VEuPathDB" id="HostDB:ENSG00000096384"/>
<dbReference type="eggNOG" id="KOG0019">
    <property type="taxonomic scope" value="Eukaryota"/>
</dbReference>
<dbReference type="GeneTree" id="ENSGT01020000230401"/>
<dbReference type="HOGENOM" id="CLU_006684_1_3_1"/>
<dbReference type="InParanoid" id="P08238"/>
<dbReference type="OMA" id="CHENVIY"/>
<dbReference type="OrthoDB" id="5426351at2759"/>
<dbReference type="PAN-GO" id="P08238">
    <property type="GO annotations" value="10 GO annotations based on evolutionary models"/>
</dbReference>
<dbReference type="PhylomeDB" id="P08238"/>
<dbReference type="TreeFam" id="TF300686"/>
<dbReference type="BRENDA" id="3.6.4.10">
    <property type="organism ID" value="2681"/>
</dbReference>
<dbReference type="PathwayCommons" id="P08238"/>
<dbReference type="Reactome" id="R-HSA-168928">
    <property type="pathway name" value="DDX58/IFIH1-mediated induction of interferon-alpha/beta"/>
</dbReference>
<dbReference type="Reactome" id="R-HSA-2029482">
    <property type="pathway name" value="Regulation of actin dynamics for phagocytic cup formation"/>
</dbReference>
<dbReference type="Reactome" id="R-HSA-3371497">
    <property type="pathway name" value="HSP90 chaperone cycle for steroid hormone receptors (SHR) in the presence of ligand"/>
</dbReference>
<dbReference type="Reactome" id="R-HSA-3371511">
    <property type="pathway name" value="HSF1 activation"/>
</dbReference>
<dbReference type="Reactome" id="R-HSA-3371568">
    <property type="pathway name" value="Attenuation phase"/>
</dbReference>
<dbReference type="Reactome" id="R-HSA-3371571">
    <property type="pathway name" value="HSF1-dependent transactivation"/>
</dbReference>
<dbReference type="Reactome" id="R-HSA-399954">
    <property type="pathway name" value="Sema3A PAK dependent Axon repulsion"/>
</dbReference>
<dbReference type="Reactome" id="R-HSA-5336415">
    <property type="pathway name" value="Uptake and function of diphtheria toxin"/>
</dbReference>
<dbReference type="Reactome" id="R-HSA-6798695">
    <property type="pathway name" value="Neutrophil degranulation"/>
</dbReference>
<dbReference type="Reactome" id="R-HSA-844456">
    <property type="pathway name" value="The NLRP3 inflammasome"/>
</dbReference>
<dbReference type="Reactome" id="R-HSA-8852276">
    <property type="pathway name" value="The role of GTSE1 in G2/M progression after G2 checkpoint"/>
</dbReference>
<dbReference type="Reactome" id="R-HSA-8937144">
    <property type="pathway name" value="Aryl hydrocarbon receptor signalling"/>
</dbReference>
<dbReference type="Reactome" id="R-HSA-8939211">
    <property type="pathway name" value="ESR-mediated signaling"/>
</dbReference>
<dbReference type="Reactome" id="R-HSA-9013418">
    <property type="pathway name" value="RHOBTB2 GTPase cycle"/>
</dbReference>
<dbReference type="Reactome" id="R-HSA-9018519">
    <property type="pathway name" value="Estrogen-dependent gene expression"/>
</dbReference>
<dbReference type="Reactome" id="R-HSA-9613829">
    <property type="pathway name" value="Chaperone Mediated Autophagy"/>
</dbReference>
<dbReference type="Reactome" id="R-HSA-9660826">
    <property type="pathway name" value="Purinergic signaling in leishmaniasis infection"/>
</dbReference>
<dbReference type="Reactome" id="R-HSA-9679191">
    <property type="pathway name" value="Potential therapeutics for SARS"/>
</dbReference>
<dbReference type="Reactome" id="R-HSA-9705671">
    <property type="pathway name" value="SARS-CoV-2 activates/modulates innate and adaptive immune responses"/>
</dbReference>
<dbReference type="Reactome" id="R-HSA-9820962">
    <property type="pathway name" value="Assembly and release of respiratory syncytial virus (RSV) virions"/>
</dbReference>
<dbReference type="Reactome" id="R-HSA-9834752">
    <property type="pathway name" value="Respiratory syncytial virus genome replication"/>
</dbReference>
<dbReference type="SignaLink" id="P08238"/>
<dbReference type="SIGNOR" id="P08238"/>
<dbReference type="BioGRID-ORCS" id="3326">
    <property type="hits" value="136 hits in 1178 CRISPR screens"/>
</dbReference>
<dbReference type="CD-CODE" id="232F8A39">
    <property type="entry name" value="P-body"/>
</dbReference>
<dbReference type="CD-CODE" id="91857CE7">
    <property type="entry name" value="Nucleolus"/>
</dbReference>
<dbReference type="CD-CODE" id="DEE660B4">
    <property type="entry name" value="Stress granule"/>
</dbReference>
<dbReference type="ChiTaRS" id="HSP90AB1">
    <property type="organism name" value="human"/>
</dbReference>
<dbReference type="EvolutionaryTrace" id="P08238"/>
<dbReference type="GeneWiki" id="HSP90AB1"/>
<dbReference type="GenomeRNAi" id="3326"/>
<dbReference type="Pharos" id="P08238">
    <property type="development level" value="Tchem"/>
</dbReference>
<dbReference type="PRO" id="PR:P08238"/>
<dbReference type="Proteomes" id="UP000005640">
    <property type="component" value="Chromosome 6"/>
</dbReference>
<dbReference type="RNAct" id="P08238">
    <property type="molecule type" value="protein"/>
</dbReference>
<dbReference type="Bgee" id="ENSG00000096384">
    <property type="expression patterns" value="Expressed in frontal pole and 212 other cell types or tissues"/>
</dbReference>
<dbReference type="ExpressionAtlas" id="P08238">
    <property type="expression patterns" value="baseline and differential"/>
</dbReference>
<dbReference type="GO" id="GO:0034751">
    <property type="term" value="C:aryl hydrocarbon receptor complex"/>
    <property type="evidence" value="ECO:0000314"/>
    <property type="project" value="UniProtKB"/>
</dbReference>
<dbReference type="GO" id="GO:0044295">
    <property type="term" value="C:axonal growth cone"/>
    <property type="evidence" value="ECO:0000250"/>
    <property type="project" value="ARUK-UCL"/>
</dbReference>
<dbReference type="GO" id="GO:0009986">
    <property type="term" value="C:cell surface"/>
    <property type="evidence" value="ECO:0007669"/>
    <property type="project" value="UniProtKB-SubCell"/>
</dbReference>
<dbReference type="GO" id="GO:0005737">
    <property type="term" value="C:cytoplasm"/>
    <property type="evidence" value="ECO:0000314"/>
    <property type="project" value="UniProtKB"/>
</dbReference>
<dbReference type="GO" id="GO:0005829">
    <property type="term" value="C:cytosol"/>
    <property type="evidence" value="ECO:0000314"/>
    <property type="project" value="HPA"/>
</dbReference>
<dbReference type="GO" id="GO:0044294">
    <property type="term" value="C:dendritic growth cone"/>
    <property type="evidence" value="ECO:0000250"/>
    <property type="project" value="ARUK-UCL"/>
</dbReference>
<dbReference type="GO" id="GO:0120293">
    <property type="term" value="C:dynein axonemal particle"/>
    <property type="evidence" value="ECO:0000250"/>
    <property type="project" value="UniProtKB"/>
</dbReference>
<dbReference type="GO" id="GO:0070062">
    <property type="term" value="C:extracellular exosome"/>
    <property type="evidence" value="ECO:0007005"/>
    <property type="project" value="UniProtKB"/>
</dbReference>
<dbReference type="GO" id="GO:0005576">
    <property type="term" value="C:extracellular region"/>
    <property type="evidence" value="ECO:0000314"/>
    <property type="project" value="UniProtKB"/>
</dbReference>
<dbReference type="GO" id="GO:1904813">
    <property type="term" value="C:ficolin-1-rich granule lumen"/>
    <property type="evidence" value="ECO:0000304"/>
    <property type="project" value="Reactome"/>
</dbReference>
<dbReference type="GO" id="GO:1990565">
    <property type="term" value="C:HSP90-CDC37 chaperone complex"/>
    <property type="evidence" value="ECO:0000314"/>
    <property type="project" value="ParkinsonsUK-UCL"/>
</dbReference>
<dbReference type="GO" id="GO:0042470">
    <property type="term" value="C:melanosome"/>
    <property type="evidence" value="ECO:0007669"/>
    <property type="project" value="UniProtKB-SubCell"/>
</dbReference>
<dbReference type="GO" id="GO:0016020">
    <property type="term" value="C:membrane"/>
    <property type="evidence" value="ECO:0007005"/>
    <property type="project" value="UniProtKB"/>
</dbReference>
<dbReference type="GO" id="GO:0005739">
    <property type="term" value="C:mitochondrion"/>
    <property type="evidence" value="ECO:0007005"/>
    <property type="project" value="UniProtKB"/>
</dbReference>
<dbReference type="GO" id="GO:0043025">
    <property type="term" value="C:neuronal cell body"/>
    <property type="evidence" value="ECO:0000250"/>
    <property type="project" value="ARUK-UCL"/>
</dbReference>
<dbReference type="GO" id="GO:0005654">
    <property type="term" value="C:nucleoplasm"/>
    <property type="evidence" value="ECO:0000304"/>
    <property type="project" value="Reactome"/>
</dbReference>
<dbReference type="GO" id="GO:0005634">
    <property type="term" value="C:nucleus"/>
    <property type="evidence" value="ECO:0000314"/>
    <property type="project" value="UniProtKB"/>
</dbReference>
<dbReference type="GO" id="GO:0048471">
    <property type="term" value="C:perinuclear region of cytoplasm"/>
    <property type="evidence" value="ECO:0000250"/>
    <property type="project" value="ARUK-UCL"/>
</dbReference>
<dbReference type="GO" id="GO:0005886">
    <property type="term" value="C:plasma membrane"/>
    <property type="evidence" value="ECO:0000314"/>
    <property type="project" value="HPA"/>
</dbReference>
<dbReference type="GO" id="GO:0101031">
    <property type="term" value="C:protein folding chaperone complex"/>
    <property type="evidence" value="ECO:0000315"/>
    <property type="project" value="ARUK-UCL"/>
</dbReference>
<dbReference type="GO" id="GO:0032991">
    <property type="term" value="C:protein-containing complex"/>
    <property type="evidence" value="ECO:0000314"/>
    <property type="project" value="UniProtKB"/>
</dbReference>
<dbReference type="GO" id="GO:0034774">
    <property type="term" value="C:secretory granule lumen"/>
    <property type="evidence" value="ECO:0000304"/>
    <property type="project" value="Reactome"/>
</dbReference>
<dbReference type="GO" id="GO:0005524">
    <property type="term" value="F:ATP binding"/>
    <property type="evidence" value="ECO:0000314"/>
    <property type="project" value="CAFA"/>
</dbReference>
<dbReference type="GO" id="GO:0016887">
    <property type="term" value="F:ATP hydrolysis activity"/>
    <property type="evidence" value="ECO:0000318"/>
    <property type="project" value="GO_Central"/>
</dbReference>
<dbReference type="GO" id="GO:0043008">
    <property type="term" value="F:ATP-dependent protein binding"/>
    <property type="evidence" value="ECO:0000353"/>
    <property type="project" value="CAFA"/>
</dbReference>
<dbReference type="GO" id="GO:0140662">
    <property type="term" value="F:ATP-dependent protein folding chaperone"/>
    <property type="evidence" value="ECO:0007669"/>
    <property type="project" value="InterPro"/>
</dbReference>
<dbReference type="GO" id="GO:0045296">
    <property type="term" value="F:cadherin binding"/>
    <property type="evidence" value="ECO:0007005"/>
    <property type="project" value="BHF-UCL"/>
</dbReference>
<dbReference type="GO" id="GO:0097718">
    <property type="term" value="F:disordered domain specific binding"/>
    <property type="evidence" value="ECO:0000353"/>
    <property type="project" value="CAFA"/>
</dbReference>
<dbReference type="GO" id="GO:0070182">
    <property type="term" value="F:DNA polymerase binding"/>
    <property type="evidence" value="ECO:0000353"/>
    <property type="project" value="BHF-UCL"/>
</dbReference>
<dbReference type="GO" id="GO:0003725">
    <property type="term" value="F:double-stranded RNA binding"/>
    <property type="evidence" value="ECO:0000314"/>
    <property type="project" value="MGI"/>
</dbReference>
<dbReference type="GO" id="GO:0031072">
    <property type="term" value="F:heat shock protein binding"/>
    <property type="evidence" value="ECO:0000353"/>
    <property type="project" value="UniProtKB"/>
</dbReference>
<dbReference type="GO" id="GO:0042826">
    <property type="term" value="F:histone deacetylase binding"/>
    <property type="evidence" value="ECO:0000353"/>
    <property type="project" value="BHF-UCL"/>
</dbReference>
<dbReference type="GO" id="GO:1990226">
    <property type="term" value="F:histone methyltransferase binding"/>
    <property type="evidence" value="ECO:0000353"/>
    <property type="project" value="UniProtKB"/>
</dbReference>
<dbReference type="GO" id="GO:0042802">
    <property type="term" value="F:identical protein binding"/>
    <property type="evidence" value="ECO:0000353"/>
    <property type="project" value="IntAct"/>
</dbReference>
<dbReference type="GO" id="GO:0019900">
    <property type="term" value="F:kinase binding"/>
    <property type="evidence" value="ECO:0000353"/>
    <property type="project" value="UniProtKB"/>
</dbReference>
<dbReference type="GO" id="GO:0023026">
    <property type="term" value="F:MHC class II protein complex binding"/>
    <property type="evidence" value="ECO:0007005"/>
    <property type="project" value="UniProtKB"/>
</dbReference>
<dbReference type="GO" id="GO:0030235">
    <property type="term" value="F:nitric-oxide synthase regulator activity"/>
    <property type="evidence" value="ECO:0000250"/>
    <property type="project" value="UniProtKB"/>
</dbReference>
<dbReference type="GO" id="GO:0042277">
    <property type="term" value="F:peptide binding"/>
    <property type="evidence" value="ECO:0000353"/>
    <property type="project" value="UniProtKB"/>
</dbReference>
<dbReference type="GO" id="GO:0046983">
    <property type="term" value="F:protein dimerization activity"/>
    <property type="evidence" value="ECO:0000314"/>
    <property type="project" value="UniProtKB"/>
</dbReference>
<dbReference type="GO" id="GO:0044183">
    <property type="term" value="F:protein folding chaperone"/>
    <property type="evidence" value="ECO:0000250"/>
    <property type="project" value="ARUK-UCL"/>
</dbReference>
<dbReference type="GO" id="GO:0042803">
    <property type="term" value="F:protein homodimerization activity"/>
    <property type="evidence" value="ECO:0000314"/>
    <property type="project" value="CAFA"/>
</dbReference>
<dbReference type="GO" id="GO:0019901">
    <property type="term" value="F:protein kinase binding"/>
    <property type="evidence" value="ECO:0007669"/>
    <property type="project" value="Ensembl"/>
</dbReference>
<dbReference type="GO" id="GO:0019887">
    <property type="term" value="F:protein kinase regulator activity"/>
    <property type="evidence" value="ECO:0007669"/>
    <property type="project" value="Ensembl"/>
</dbReference>
<dbReference type="GO" id="GO:0072542">
    <property type="term" value="F:protein phosphatase activator activity"/>
    <property type="evidence" value="ECO:0000314"/>
    <property type="project" value="UniProtKB"/>
</dbReference>
<dbReference type="GO" id="GO:0141069">
    <property type="term" value="F:receptor ligand inhibitor activity"/>
    <property type="evidence" value="ECO:0000314"/>
    <property type="project" value="UniProtKB"/>
</dbReference>
<dbReference type="GO" id="GO:0003723">
    <property type="term" value="F:RNA binding"/>
    <property type="evidence" value="ECO:0007005"/>
    <property type="project" value="UniProtKB"/>
</dbReference>
<dbReference type="GO" id="GO:0048156">
    <property type="term" value="F:tau protein binding"/>
    <property type="evidence" value="ECO:0000303"/>
    <property type="project" value="ARUK-UCL"/>
</dbReference>
<dbReference type="GO" id="GO:0030911">
    <property type="term" value="F:TPR domain binding"/>
    <property type="evidence" value="ECO:0000250"/>
    <property type="project" value="UniProtKB"/>
</dbReference>
<dbReference type="GO" id="GO:0031625">
    <property type="term" value="F:ubiquitin protein ligase binding"/>
    <property type="evidence" value="ECO:0000353"/>
    <property type="project" value="ARUK-UCL"/>
</dbReference>
<dbReference type="GO" id="GO:0051082">
    <property type="term" value="F:unfolded protein binding"/>
    <property type="evidence" value="ECO:0000318"/>
    <property type="project" value="GO_Central"/>
</dbReference>
<dbReference type="GO" id="GO:0034605">
    <property type="term" value="P:cellular response to heat"/>
    <property type="evidence" value="ECO:0000318"/>
    <property type="project" value="GO_Central"/>
</dbReference>
<dbReference type="GO" id="GO:0071353">
    <property type="term" value="P:cellular response to interleukin-4"/>
    <property type="evidence" value="ECO:0007669"/>
    <property type="project" value="Ensembl"/>
</dbReference>
<dbReference type="GO" id="GO:0051131">
    <property type="term" value="P:chaperone-mediated protein complex assembly"/>
    <property type="evidence" value="ECO:0000314"/>
    <property type="project" value="CAFA"/>
</dbReference>
<dbReference type="GO" id="GO:0061077">
    <property type="term" value="P:chaperone-mediated protein folding"/>
    <property type="evidence" value="ECO:0000250"/>
    <property type="project" value="ARUK-UCL"/>
</dbReference>
<dbReference type="GO" id="GO:0043066">
    <property type="term" value="P:negative regulation of apoptotic process"/>
    <property type="evidence" value="ECO:0007669"/>
    <property type="project" value="Ensembl"/>
</dbReference>
<dbReference type="GO" id="GO:1901799">
    <property type="term" value="P:negative regulation of proteasomal protein catabolic process"/>
    <property type="evidence" value="ECO:0000250"/>
    <property type="project" value="ARUK-UCL"/>
</dbReference>
<dbReference type="GO" id="GO:0032435">
    <property type="term" value="P:negative regulation of proteasomal ubiquitin-dependent protein catabolic process"/>
    <property type="evidence" value="ECO:0000314"/>
    <property type="project" value="UniProtKB"/>
</dbReference>
<dbReference type="GO" id="GO:0001890">
    <property type="term" value="P:placenta development"/>
    <property type="evidence" value="ECO:0007669"/>
    <property type="project" value="Ensembl"/>
</dbReference>
<dbReference type="GO" id="GO:0045597">
    <property type="term" value="P:positive regulation of cell differentiation"/>
    <property type="evidence" value="ECO:0000315"/>
    <property type="project" value="UniProtKB"/>
</dbReference>
<dbReference type="GO" id="GO:0045429">
    <property type="term" value="P:positive regulation of nitric oxide biosynthetic process"/>
    <property type="evidence" value="ECO:0000250"/>
    <property type="project" value="UniProtKB"/>
</dbReference>
<dbReference type="GO" id="GO:2000010">
    <property type="term" value="P:positive regulation of protein localization to cell surface"/>
    <property type="evidence" value="ECO:0000314"/>
    <property type="project" value="UniProtKB"/>
</dbReference>
<dbReference type="GO" id="GO:0030511">
    <property type="term" value="P:positive regulation of transforming growth factor beta receptor signaling pathway"/>
    <property type="evidence" value="ECO:0000314"/>
    <property type="project" value="UniProtKB"/>
</dbReference>
<dbReference type="GO" id="GO:0006457">
    <property type="term" value="P:protein folding"/>
    <property type="evidence" value="ECO:0000318"/>
    <property type="project" value="GO_Central"/>
</dbReference>
<dbReference type="GO" id="GO:0050821">
    <property type="term" value="P:protein stabilization"/>
    <property type="evidence" value="ECO:0000318"/>
    <property type="project" value="GO_Central"/>
</dbReference>
<dbReference type="GO" id="GO:0051726">
    <property type="term" value="P:regulation of cell cycle"/>
    <property type="evidence" value="ECO:0000315"/>
    <property type="project" value="UniProtKB"/>
</dbReference>
<dbReference type="GO" id="GO:0032880">
    <property type="term" value="P:regulation of protein localization"/>
    <property type="evidence" value="ECO:0000250"/>
    <property type="project" value="ARUK-UCL"/>
</dbReference>
<dbReference type="GO" id="GO:0031396">
    <property type="term" value="P:regulation of protein ubiquitination"/>
    <property type="evidence" value="ECO:0000314"/>
    <property type="project" value="BHF-UCL"/>
</dbReference>
<dbReference type="GO" id="GO:0006986">
    <property type="term" value="P:response to unfolded protein"/>
    <property type="evidence" value="ECO:0000303"/>
    <property type="project" value="UniProtKB"/>
</dbReference>
<dbReference type="GO" id="GO:0097435">
    <property type="term" value="P:supramolecular fiber organization"/>
    <property type="evidence" value="ECO:0000315"/>
    <property type="project" value="CACAO"/>
</dbReference>
<dbReference type="GO" id="GO:1905323">
    <property type="term" value="P:telomerase holoenzyme complex assembly"/>
    <property type="evidence" value="ECO:0000314"/>
    <property type="project" value="BHF-UCL"/>
</dbReference>
<dbReference type="GO" id="GO:0007004">
    <property type="term" value="P:telomere maintenance via telomerase"/>
    <property type="evidence" value="ECO:0000314"/>
    <property type="project" value="BHF-UCL"/>
</dbReference>
<dbReference type="GO" id="GO:0019062">
    <property type="term" value="P:virion attachment to host cell"/>
    <property type="evidence" value="ECO:0000315"/>
    <property type="project" value="CACAO"/>
</dbReference>
<dbReference type="CDD" id="cd16927">
    <property type="entry name" value="HATPase_Hsp90-like"/>
    <property type="match status" value="1"/>
</dbReference>
<dbReference type="FunFam" id="1.20.120.790:FF:000001">
    <property type="entry name" value="Heat shock protein 90 alpha"/>
    <property type="match status" value="1"/>
</dbReference>
<dbReference type="FunFam" id="3.30.230.80:FF:000001">
    <property type="entry name" value="Heat shock protein 90 alpha"/>
    <property type="match status" value="1"/>
</dbReference>
<dbReference type="FunFam" id="3.40.50.11260:FF:000001">
    <property type="entry name" value="Heat shock protein 90 alpha"/>
    <property type="match status" value="1"/>
</dbReference>
<dbReference type="FunFam" id="3.30.565.10:FF:000204">
    <property type="entry name" value="Heat shock protein HSP 90-beta"/>
    <property type="match status" value="1"/>
</dbReference>
<dbReference type="Gene3D" id="3.30.230.80">
    <property type="match status" value="1"/>
</dbReference>
<dbReference type="Gene3D" id="3.40.50.11260">
    <property type="match status" value="1"/>
</dbReference>
<dbReference type="Gene3D" id="1.20.120.790">
    <property type="entry name" value="Heat shock protein 90, C-terminal domain"/>
    <property type="match status" value="1"/>
</dbReference>
<dbReference type="Gene3D" id="3.30.565.10">
    <property type="entry name" value="Histidine kinase-like ATPase, C-terminal domain"/>
    <property type="match status" value="1"/>
</dbReference>
<dbReference type="HAMAP" id="MF_00505">
    <property type="entry name" value="HSP90"/>
    <property type="match status" value="1"/>
</dbReference>
<dbReference type="IDEAL" id="IID00536"/>
<dbReference type="InterPro" id="IPR036890">
    <property type="entry name" value="HATPase_C_sf"/>
</dbReference>
<dbReference type="InterPro" id="IPR019805">
    <property type="entry name" value="Heat_shock_protein_90_CS"/>
</dbReference>
<dbReference type="InterPro" id="IPR037196">
    <property type="entry name" value="HSP90_C"/>
</dbReference>
<dbReference type="InterPro" id="IPR001404">
    <property type="entry name" value="Hsp90_fam"/>
</dbReference>
<dbReference type="InterPro" id="IPR020575">
    <property type="entry name" value="Hsp90_N"/>
</dbReference>
<dbReference type="InterPro" id="IPR020568">
    <property type="entry name" value="Ribosomal_Su5_D2-typ_SF"/>
</dbReference>
<dbReference type="NCBIfam" id="NF003555">
    <property type="entry name" value="PRK05218.1"/>
    <property type="match status" value="1"/>
</dbReference>
<dbReference type="PANTHER" id="PTHR11528">
    <property type="entry name" value="HEAT SHOCK PROTEIN 90 FAMILY MEMBER"/>
    <property type="match status" value="1"/>
</dbReference>
<dbReference type="Pfam" id="PF13589">
    <property type="entry name" value="HATPase_c_3"/>
    <property type="match status" value="1"/>
</dbReference>
<dbReference type="Pfam" id="PF00183">
    <property type="entry name" value="HSP90"/>
    <property type="match status" value="1"/>
</dbReference>
<dbReference type="PIRSF" id="PIRSF002583">
    <property type="entry name" value="Hsp90"/>
    <property type="match status" value="1"/>
</dbReference>
<dbReference type="PRINTS" id="PR00775">
    <property type="entry name" value="HEATSHOCK90"/>
</dbReference>
<dbReference type="SMART" id="SM00387">
    <property type="entry name" value="HATPase_c"/>
    <property type="match status" value="1"/>
</dbReference>
<dbReference type="SUPFAM" id="SSF55874">
    <property type="entry name" value="ATPase domain of HSP90 chaperone/DNA topoisomerase II/histidine kinase"/>
    <property type="match status" value="1"/>
</dbReference>
<dbReference type="SUPFAM" id="SSF110942">
    <property type="entry name" value="HSP90 C-terminal domain"/>
    <property type="match status" value="1"/>
</dbReference>
<dbReference type="SUPFAM" id="SSF54211">
    <property type="entry name" value="Ribosomal protein S5 domain 2-like"/>
    <property type="match status" value="1"/>
</dbReference>
<dbReference type="PROSITE" id="PS00298">
    <property type="entry name" value="HSP90"/>
    <property type="match status" value="1"/>
</dbReference>
<feature type="initiator methionine" description="Removed" evidence="35">
    <location>
        <position position="1"/>
    </location>
</feature>
<feature type="chain" id="PRO_0000062917" description="Heat shock protein HSP 90-beta">
    <location>
        <begin position="2"/>
        <end position="724"/>
    </location>
</feature>
<feature type="region of interest" description="Interaction with TP53" evidence="8">
    <location>
        <begin position="2"/>
        <end position="527"/>
    </location>
</feature>
<feature type="region of interest" description="Interaction with BIRC2" evidence="36">
    <location>
        <begin position="2"/>
        <end position="214"/>
    </location>
</feature>
<feature type="region of interest" description="Interaction with NR3C1" evidence="3">
    <location>
        <begin position="9"/>
        <end position="231"/>
    </location>
</feature>
<feature type="region of interest" description="Interaction with AHSA1" evidence="36">
    <location>
        <begin position="215"/>
        <end position="552"/>
    </location>
</feature>
<feature type="region of interest" description="Disordered" evidence="6">
    <location>
        <begin position="222"/>
        <end position="270"/>
    </location>
</feature>
<feature type="region of interest" description="Interaction with NR3C1" evidence="3">
    <location>
        <begin position="264"/>
        <end position="608"/>
    </location>
</feature>
<feature type="region of interest" description="Interaction with NR1D1" evidence="3">
    <location>
        <begin position="620"/>
        <end position="723"/>
    </location>
</feature>
<feature type="region of interest" description="Disordered" evidence="6">
    <location>
        <begin position="696"/>
        <end position="724"/>
    </location>
</feature>
<feature type="short sequence motif" description="TPR repeat-binding">
    <location>
        <begin position="720"/>
        <end position="724"/>
    </location>
</feature>
<feature type="compositionally biased region" description="Acidic residues" evidence="6">
    <location>
        <begin position="225"/>
        <end position="244"/>
    </location>
</feature>
<feature type="binding site" evidence="1">
    <location>
        <position position="46"/>
    </location>
    <ligand>
        <name>ATP</name>
        <dbReference type="ChEBI" id="CHEBI:30616"/>
    </ligand>
</feature>
<feature type="binding site">
    <location>
        <position position="88"/>
    </location>
    <ligand>
        <name>ATP</name>
        <dbReference type="ChEBI" id="CHEBI:30616"/>
    </ligand>
</feature>
<feature type="binding site" evidence="1">
    <location>
        <position position="107"/>
    </location>
    <ligand>
        <name>ATP</name>
        <dbReference type="ChEBI" id="CHEBI:30616"/>
    </ligand>
</feature>
<feature type="binding site" evidence="1">
    <location>
        <position position="133"/>
    </location>
    <ligand>
        <name>ATP</name>
        <dbReference type="ChEBI" id="CHEBI:30616"/>
    </ligand>
</feature>
<feature type="binding site" evidence="1">
    <location>
        <position position="392"/>
    </location>
    <ligand>
        <name>ATP</name>
        <dbReference type="ChEBI" id="CHEBI:30616"/>
    </ligand>
</feature>
<feature type="site" description="Cleaved under oxidative stress" evidence="28">
    <location>
        <begin position="126"/>
        <end position="127"/>
    </location>
</feature>
<feature type="modified residue" description="N6-succinyllysine" evidence="3">
    <location>
        <position position="219"/>
    </location>
</feature>
<feature type="modified residue" description="Phosphoserine" evidence="52 53 56 57 58">
    <location>
        <position position="226"/>
    </location>
</feature>
<feature type="modified residue" description="Phosphoserine" evidence="41 50 58">
    <location>
        <position position="255"/>
    </location>
</feature>
<feature type="modified residue" description="Phosphoserine" evidence="3">
    <location>
        <position position="261"/>
    </location>
</feature>
<feature type="modified residue" description="Phosphothreonine" evidence="51 58">
    <location>
        <position position="297"/>
    </location>
</feature>
<feature type="modified residue" description="Phosphotyrosine; by SRC" evidence="31">
    <location>
        <position position="301"/>
    </location>
</feature>
<feature type="modified residue" description="Phosphotyrosine" evidence="3">
    <location>
        <position position="305"/>
    </location>
</feature>
<feature type="modified residue" description="Phosphoserine" evidence="54">
    <location>
        <position position="307"/>
    </location>
</feature>
<feature type="modified residue" description="N6-malonyllysine" evidence="22">
    <location>
        <position position="399"/>
    </location>
</feature>
<feature type="modified residue" description="N6-acetyllysine" evidence="55">
    <location>
        <position position="435"/>
    </location>
</feature>
<feature type="modified residue" description="Phosphoserine" evidence="58">
    <location>
        <position position="445"/>
    </location>
</feature>
<feature type="modified residue" description="Phosphothreonine" evidence="58">
    <location>
        <position position="479"/>
    </location>
</feature>
<feature type="modified residue" description="N6-acetyllysine" evidence="55">
    <location>
        <position position="481"/>
    </location>
</feature>
<feature type="modified residue" description="Phosphotyrosine" evidence="3">
    <location>
        <position position="484"/>
    </location>
</feature>
<feature type="modified residue" description="N6-methylated lysine; alternate" evidence="34">
    <location>
        <position position="531"/>
    </location>
</feature>
<feature type="modified residue" description="N6-succinyllysine; alternate" evidence="3">
    <location>
        <position position="531"/>
    </location>
</feature>
<feature type="modified residue" description="N6-methylated lysine" evidence="34">
    <location>
        <position position="574"/>
    </location>
</feature>
<feature type="modified residue" description="N6-succinyllysine" evidence="3">
    <location>
        <position position="577"/>
    </location>
</feature>
<feature type="modified residue" description="S-nitrosocysteine" evidence="47">
    <location>
        <position position="590"/>
    </location>
</feature>
<feature type="modified residue" description="N6-acetyllysine" evidence="3">
    <location>
        <position position="624"/>
    </location>
</feature>
<feature type="modified residue" description="Phosphoserine" evidence="59">
    <location>
        <position position="669"/>
    </location>
</feature>
<feature type="modified residue" description="Phosphoserine; by PLK2 and PLK3" evidence="26">
    <location>
        <position position="718"/>
    </location>
</feature>
<feature type="glycosylation site" description="O-linked (GlcNAc) serine" evidence="1">
    <location>
        <position position="434"/>
    </location>
</feature>
<feature type="glycosylation site" description="O-linked (GlcNAc) serine" evidence="1">
    <location>
        <position position="452"/>
    </location>
</feature>
<feature type="sequence variant" id="VAR_049624" description="In dbSNP:rs11538975.">
    <original>K</original>
    <variation>E</variation>
    <location>
        <position position="349"/>
    </location>
</feature>
<feature type="mutagenesis site" description="Strong ATP-binding. Strong interaction with HSF1, HIF1A, ERBB2, MET, KEAP1 and RHOBTB2." evidence="37">
    <original>E</original>
    <variation>A</variation>
    <location>
        <position position="42"/>
    </location>
</feature>
<feature type="mutagenesis site" description="Impaired ATP-binding. Strong interaction with HIF1A, MET, KEAP1 and RHOBTB2. Loss of interaction with HSF1 and ERBB2." evidence="37">
    <original>D</original>
    <variation>A</variation>
    <location>
        <position position="88"/>
    </location>
</feature>
<feature type="mutagenesis site" description="Increases the binding affinity for AHR; when associated with A-255. Increases AHR transcription activity; when associated with A-255." evidence="9">
    <original>S</original>
    <variation>A</variation>
    <location>
        <position position="226"/>
    </location>
</feature>
<feature type="mutagenesis site" description="No effect on the interaction with AHR; when associated with E-255." evidence="9">
    <original>S</original>
    <variation>E</variation>
    <location>
        <position position="226"/>
    </location>
</feature>
<feature type="mutagenesis site" description="Increases the binding affinity for AHR; when associated with A-226. Increases AHR transcription activity; when associated with A-226." evidence="9">
    <original>S</original>
    <variation>A</variation>
    <location>
        <position position="255"/>
    </location>
</feature>
<feature type="mutagenesis site" description="No effect on the interaction with AHR; when associated with E-226." evidence="9">
    <original>S</original>
    <variation>E</variation>
    <location>
        <position position="255"/>
    </location>
</feature>
<feature type="mutagenesis site" description="Decreases interaction with NOS3 and SRC. impairs resists LPS-induced tyrosine phosphorylation. Does not block LPS-induced pp60src phosphorylation." evidence="31">
    <original>Y</original>
    <variation>F</variation>
    <location>
        <position position="301"/>
    </location>
</feature>
<feature type="mutagenesis site" description="Highly decreases the signal of SMYD2-dependent HSP90AB1 methylation; when associated with A-574. Diminishes dimerized form; when associated with A-574. Reduces interaction with STIP1 or CDC37; when associated with A-574." evidence="34">
    <original>K</original>
    <variation>A</variation>
    <location>
        <position position="531"/>
    </location>
</feature>
<feature type="mutagenesis site" description="Decreases the signal of SMYD2-dependent HSP90AB1 methylation. Highly decreases the signal of SMYD2-dependent HSP90AB1 methylation; when associated with A-531. Diminishes dimerized form; when associated with A-531. Reduces interaction with STIP1 or CDC37; when associated with A-531." evidence="34">
    <original>K</original>
    <variation>A</variation>
    <location>
        <position position="574"/>
    </location>
</feature>
<feature type="mutagenesis site" description="Reduced ATPase activity and client protein activation." evidence="19">
    <original>C</original>
    <variation>A</variation>
    <variation>N</variation>
    <variation>D</variation>
    <location>
        <position position="590"/>
    </location>
</feature>
<feature type="sequence conflict" description="In Ref. 1; AAA36025." evidence="46" ref="1">
    <original>T</original>
    <variation>R</variation>
    <location>
        <position position="147"/>
    </location>
</feature>
<feature type="sequence conflict" description="In Ref. 1; AAA36025." evidence="46" ref="1">
    <original>R</original>
    <variation>M</variation>
    <location>
        <position position="177"/>
    </location>
</feature>
<feature type="sequence conflict" description="In Ref. 5; CAB66478." evidence="46" ref="5">
    <original>V</original>
    <variation>A</variation>
    <location>
        <position position="403"/>
    </location>
</feature>
<feature type="strand" evidence="62">
    <location>
        <begin position="2"/>
        <end position="6"/>
    </location>
</feature>
<feature type="strand" evidence="63">
    <location>
        <begin position="13"/>
        <end position="16"/>
    </location>
</feature>
<feature type="helix" evidence="63">
    <location>
        <begin position="19"/>
        <end position="30"/>
    </location>
</feature>
<feature type="turn" evidence="61">
    <location>
        <begin position="34"/>
        <end position="37"/>
    </location>
</feature>
<feature type="helix" evidence="63">
    <location>
        <begin position="38"/>
        <end position="60"/>
    </location>
</feature>
<feature type="helix" evidence="63">
    <location>
        <begin position="62"/>
        <end position="65"/>
    </location>
</feature>
<feature type="strand" evidence="63">
    <location>
        <begin position="73"/>
        <end position="78"/>
    </location>
</feature>
<feature type="turn" evidence="63">
    <location>
        <begin position="79"/>
        <end position="82"/>
    </location>
</feature>
<feature type="strand" evidence="63">
    <location>
        <begin position="83"/>
        <end position="88"/>
    </location>
</feature>
<feature type="helix" evidence="63">
    <location>
        <begin position="95"/>
        <end position="99"/>
    </location>
</feature>
<feature type="helix" evidence="63">
    <location>
        <begin position="101"/>
        <end position="118"/>
    </location>
</feature>
<feature type="helix" evidence="63">
    <location>
        <begin position="123"/>
        <end position="129"/>
    </location>
</feature>
<feature type="helix" evidence="63">
    <location>
        <begin position="132"/>
        <end position="138"/>
    </location>
</feature>
<feature type="strand" evidence="63">
    <location>
        <begin position="140"/>
        <end position="148"/>
    </location>
</feature>
<feature type="strand" evidence="66">
    <location>
        <begin position="150"/>
        <end position="152"/>
    </location>
</feature>
<feature type="strand" evidence="63">
    <location>
        <begin position="155"/>
        <end position="159"/>
    </location>
</feature>
<feature type="strand" evidence="67">
    <location>
        <begin position="161"/>
        <end position="163"/>
    </location>
</feature>
<feature type="strand" evidence="63">
    <location>
        <begin position="164"/>
        <end position="169"/>
    </location>
</feature>
<feature type="strand" evidence="63">
    <location>
        <begin position="176"/>
        <end position="185"/>
    </location>
</feature>
<feature type="helix" evidence="63">
    <location>
        <begin position="187"/>
        <end position="193"/>
    </location>
</feature>
<feature type="helix" evidence="63">
    <location>
        <begin position="195"/>
        <end position="205"/>
    </location>
</feature>
<feature type="strand" evidence="64">
    <location>
        <begin position="206"/>
        <end position="208"/>
    </location>
</feature>
<feature type="strand" evidence="63">
    <location>
        <begin position="213"/>
        <end position="215"/>
    </location>
</feature>
<feature type="strand" evidence="66">
    <location>
        <begin position="217"/>
        <end position="219"/>
    </location>
</feature>
<feature type="strand" evidence="68">
    <location>
        <begin position="277"/>
        <end position="282"/>
    </location>
</feature>
<feature type="helix" evidence="60">
    <location>
        <begin position="288"/>
        <end position="290"/>
    </location>
</feature>
<feature type="helix" evidence="60">
    <location>
        <begin position="293"/>
        <end position="295"/>
    </location>
</feature>
<feature type="helix" evidence="60">
    <location>
        <begin position="298"/>
        <end position="309"/>
    </location>
</feature>
<feature type="strand" evidence="60">
    <location>
        <begin position="316"/>
        <end position="323"/>
    </location>
</feature>
<feature type="strand" evidence="60">
    <location>
        <begin position="325"/>
        <end position="327"/>
    </location>
</feature>
<feature type="strand" evidence="60">
    <location>
        <begin position="329"/>
        <end position="335"/>
    </location>
</feature>
<feature type="turn" evidence="68">
    <location>
        <begin position="341"/>
        <end position="344"/>
    </location>
</feature>
<feature type="strand" evidence="68">
    <location>
        <begin position="346"/>
        <end position="348"/>
    </location>
</feature>
<feature type="strand" evidence="60">
    <location>
        <begin position="353"/>
        <end position="357"/>
    </location>
</feature>
<feature type="strand" evidence="60">
    <location>
        <begin position="360"/>
        <end position="364"/>
    </location>
</feature>
<feature type="helix" evidence="60">
    <location>
        <begin position="367"/>
        <end position="369"/>
    </location>
</feature>
<feature type="helix" evidence="60">
    <location>
        <begin position="372"/>
        <end position="374"/>
    </location>
</feature>
<feature type="strand" evidence="60">
    <location>
        <begin position="378"/>
        <end position="386"/>
    </location>
</feature>
<feature type="helix" evidence="60">
    <location>
        <begin position="395"/>
        <end position="420"/>
    </location>
</feature>
<feature type="helix" evidence="60">
    <location>
        <begin position="423"/>
        <end position="443"/>
    </location>
</feature>
<feature type="helix" evidence="60">
    <location>
        <begin position="445"/>
        <end position="447"/>
    </location>
</feature>
<feature type="helix" evidence="60">
    <location>
        <begin position="448"/>
        <end position="453"/>
    </location>
</feature>
<feature type="strand" evidence="60">
    <location>
        <begin position="456"/>
        <end position="459"/>
    </location>
</feature>
<feature type="turn" evidence="60">
    <location>
        <begin position="460"/>
        <end position="464"/>
    </location>
</feature>
<feature type="helix" evidence="60">
    <location>
        <begin position="469"/>
        <end position="474"/>
    </location>
</feature>
<feature type="strand" evidence="60">
    <location>
        <begin position="482"/>
        <end position="486"/>
    </location>
</feature>
<feature type="helix" evidence="60">
    <location>
        <begin position="491"/>
        <end position="495"/>
    </location>
</feature>
<feature type="helix" evidence="60">
    <location>
        <begin position="498"/>
        <end position="504"/>
    </location>
</feature>
<feature type="turn" evidence="60">
    <location>
        <begin position="505"/>
        <end position="507"/>
    </location>
</feature>
<feature type="strand" evidence="60">
    <location>
        <begin position="510"/>
        <end position="512"/>
    </location>
</feature>
<feature type="helix" evidence="60">
    <location>
        <begin position="518"/>
        <end position="525"/>
    </location>
</feature>
<feature type="strand" evidence="67">
    <location>
        <begin position="526"/>
        <end position="528"/>
    </location>
</feature>
<feature type="strand" evidence="60">
    <location>
        <begin position="531"/>
        <end position="535"/>
    </location>
</feature>
<feature type="strand" evidence="68">
    <location>
        <begin position="538"/>
        <end position="540"/>
    </location>
</feature>
<feature type="helix" evidence="68">
    <location>
        <begin position="547"/>
        <end position="570"/>
    </location>
</feature>
<feature type="turn" evidence="68">
    <location>
        <begin position="571"/>
        <end position="574"/>
    </location>
</feature>
<feature type="strand" evidence="68">
    <location>
        <begin position="576"/>
        <end position="580"/>
    </location>
</feature>
<feature type="strand" evidence="68">
    <location>
        <begin position="585"/>
        <end position="593"/>
    </location>
</feature>
<feature type="strand" evidence="68">
    <location>
        <begin position="595"/>
        <end position="598"/>
    </location>
</feature>
<feature type="helix" evidence="68">
    <location>
        <begin position="600"/>
        <end position="607"/>
    </location>
</feature>
<feature type="strand" evidence="68">
    <location>
        <begin position="610"/>
        <end position="612"/>
    </location>
</feature>
<feature type="helix" evidence="64">
    <location>
        <begin position="614"/>
        <end position="616"/>
    </location>
</feature>
<feature type="helix" evidence="68">
    <location>
        <begin position="617"/>
        <end position="619"/>
    </location>
</feature>
<feature type="strand" evidence="68">
    <location>
        <begin position="624"/>
        <end position="628"/>
    </location>
</feature>
<feature type="strand" evidence="65">
    <location>
        <begin position="630"/>
        <end position="632"/>
    </location>
</feature>
<feature type="helix" evidence="68">
    <location>
        <begin position="633"/>
        <end position="644"/>
    </location>
</feature>
<feature type="helix" evidence="68">
    <location>
        <begin position="649"/>
        <end position="665"/>
    </location>
</feature>
<feature type="helix" evidence="68">
    <location>
        <begin position="673"/>
        <end position="688"/>
    </location>
</feature>
<feature type="helix" evidence="68">
    <location>
        <begin position="716"/>
        <end position="720"/>
    </location>
</feature>
<gene>
    <name evidence="49" type="primary">HSP90AB1</name>
    <name type="synonym">HSP90B</name>
    <name type="synonym">HSPC2</name>
    <name evidence="42" type="synonym">HSPC3</name>
    <name type="synonym">HSPCB</name>
</gene>
<sequence>MPEEVHHGEEEVETFAFQAEIAQLMSLIINTFYSNKEIFLRELISNASDALDKIRYESLTDPSKLDSGKELKIDIIPNPQERTLTLVDTGIGMTKADLINNLGTIAKSGTKAFMEALQAGADISMIGQFGVGFYSAYLVAEKVVVITKHNDDEQYAWESSAGGSFTVRADHGEPIGRGTKVILHLKEDQTEYLEERRVKEVVKKHSQFIGYPITLYLEKEREKEISDDEAEEEKGEKEEEDKDDEEKPKIEDVGSDEEDDSGKDKKKKTKKIKEKYIDQEELNKTKPIWTRNPDDITQEEYGEFYKSLTNDWEDHLAVKHFSVEGQLEFRALLFIPRRAPFDLFENKKKKNNIKLYVRRVFIMDSCDELIPEYLNFIRGVVDSEDLPLNISREMLQQSKILKVIRKNIVKKCLELFSELAEDKENYKKFYEAFSKNLKLGIHEDSTNRRRLSELLRYHTSQSGDEMTSLSEYVSRMKETQKSIYYITGESKEQVANSAFVERVRKRGFEVVYMTEPIDEYCVQQLKEFDGKSLVSVTKEGLELPEDEEEKKKMEESKAKFENLCKLMKEILDKKVEKVTISNRLVSSPCCIVTSTYGWTANMERIMKAQALRDNSTMGYMMAKKHLEINPDHPIVETLRQKAEADKNDKAVKDLVVLLFETALLSSGFSLEDPQTHSNRIYRMIKLGLGIDEDEVAAEEPNAAVPDEIPPLEGDEDASRMEEVD</sequence>
<accession>P08238</accession>
<accession>B2R5P0</accession>
<accession>Q5T9W7</accession>
<accession>Q9NQW0</accession>
<accession>Q9NTK6</accession>
<keyword id="KW-0002">3D-structure</keyword>
<keyword id="KW-0007">Acetylation</keyword>
<keyword id="KW-0067">ATP-binding</keyword>
<keyword id="KW-1003">Cell membrane</keyword>
<keyword id="KW-0143">Chaperone</keyword>
<keyword id="KW-0963">Cytoplasm</keyword>
<keyword id="KW-0903">Direct protein sequencing</keyword>
<keyword id="KW-0325">Glycoprotein</keyword>
<keyword id="KW-0472">Membrane</keyword>
<keyword id="KW-0488">Methylation</keyword>
<keyword id="KW-0547">Nucleotide-binding</keyword>
<keyword id="KW-0539">Nucleus</keyword>
<keyword id="KW-0597">Phosphoprotein</keyword>
<keyword id="KW-1267">Proteomics identification</keyword>
<keyword id="KW-1185">Reference proteome</keyword>
<keyword id="KW-0702">S-nitrosylation</keyword>
<keyword id="KW-0964">Secreted</keyword>
<keyword id="KW-0346">Stress response</keyword>
<keyword id="KW-0832">Ubl conjugation</keyword>
<evidence type="ECO:0000250" key="1"/>
<evidence type="ECO:0000250" key="2">
    <source>
        <dbReference type="UniProtKB" id="P07900"/>
    </source>
</evidence>
<evidence type="ECO:0000250" key="3">
    <source>
        <dbReference type="UniProtKB" id="P11499"/>
    </source>
</evidence>
<evidence type="ECO:0000250" key="4">
    <source>
        <dbReference type="UniProtKB" id="P34058"/>
    </source>
</evidence>
<evidence type="ECO:0000250" key="5">
    <source>
        <dbReference type="UniProtKB" id="Q6AZV1"/>
    </source>
</evidence>
<evidence type="ECO:0000256" key="6">
    <source>
        <dbReference type="SAM" id="MobiDB-lite"/>
    </source>
</evidence>
<evidence type="ECO:0000269" key="7">
    <source>
    </source>
</evidence>
<evidence type="ECO:0000269" key="8">
    <source>
    </source>
</evidence>
<evidence type="ECO:0000269" key="9">
    <source>
    </source>
</evidence>
<evidence type="ECO:0000269" key="10">
    <source>
    </source>
</evidence>
<evidence type="ECO:0000269" key="11">
    <source>
    </source>
</evidence>
<evidence type="ECO:0000269" key="12">
    <source>
    </source>
</evidence>
<evidence type="ECO:0000269" key="13">
    <source>
    </source>
</evidence>
<evidence type="ECO:0000269" key="14">
    <source>
    </source>
</evidence>
<evidence type="ECO:0000269" key="15">
    <source>
    </source>
</evidence>
<evidence type="ECO:0000269" key="16">
    <source>
    </source>
</evidence>
<evidence type="ECO:0000269" key="17">
    <source>
    </source>
</evidence>
<evidence type="ECO:0000269" key="18">
    <source>
    </source>
</evidence>
<evidence type="ECO:0000269" key="19">
    <source>
    </source>
</evidence>
<evidence type="ECO:0000269" key="20">
    <source>
    </source>
</evidence>
<evidence type="ECO:0000269" key="21">
    <source>
    </source>
</evidence>
<evidence type="ECO:0000269" key="22">
    <source>
    </source>
</evidence>
<evidence type="ECO:0000269" key="23">
    <source>
    </source>
</evidence>
<evidence type="ECO:0000269" key="24">
    <source>
    </source>
</evidence>
<evidence type="ECO:0000269" key="25">
    <source>
    </source>
</evidence>
<evidence type="ECO:0000269" key="26">
    <source>
    </source>
</evidence>
<evidence type="ECO:0000269" key="27">
    <source>
    </source>
</evidence>
<evidence type="ECO:0000269" key="28">
    <source>
    </source>
</evidence>
<evidence type="ECO:0000269" key="29">
    <source>
    </source>
</evidence>
<evidence type="ECO:0000269" key="30">
    <source>
    </source>
</evidence>
<evidence type="ECO:0000269" key="31">
    <source>
    </source>
</evidence>
<evidence type="ECO:0000269" key="32">
    <source>
    </source>
</evidence>
<evidence type="ECO:0000269" key="33">
    <source>
    </source>
</evidence>
<evidence type="ECO:0000269" key="34">
    <source>
    </source>
</evidence>
<evidence type="ECO:0000269" key="35">
    <source>
    </source>
</evidence>
<evidence type="ECO:0000269" key="36">
    <source>
    </source>
</evidence>
<evidence type="ECO:0000269" key="37">
    <source>
    </source>
</evidence>
<evidence type="ECO:0000269" key="38">
    <source>
    </source>
</evidence>
<evidence type="ECO:0000269" key="39">
    <source>
    </source>
</evidence>
<evidence type="ECO:0000269" key="40">
    <source>
    </source>
</evidence>
<evidence type="ECO:0000269" key="41">
    <source ref="12"/>
</evidence>
<evidence type="ECO:0000303" key="42">
    <source>
    </source>
</evidence>
<evidence type="ECO:0000303" key="43">
    <source>
    </source>
</evidence>
<evidence type="ECO:0000303" key="44">
    <source>
    </source>
</evidence>
<evidence type="ECO:0000303" key="45">
    <source>
    </source>
</evidence>
<evidence type="ECO:0000305" key="46"/>
<evidence type="ECO:0000305" key="47">
    <source>
    </source>
</evidence>
<evidence type="ECO:0000305" key="48">
    <source>
    </source>
</evidence>
<evidence type="ECO:0000312" key="49">
    <source>
        <dbReference type="HGNC" id="HGNC:5258"/>
    </source>
</evidence>
<evidence type="ECO:0007744" key="50">
    <source>
    </source>
</evidence>
<evidence type="ECO:0007744" key="51">
    <source>
    </source>
</evidence>
<evidence type="ECO:0007744" key="52">
    <source>
    </source>
</evidence>
<evidence type="ECO:0007744" key="53">
    <source>
    </source>
</evidence>
<evidence type="ECO:0007744" key="54">
    <source>
    </source>
</evidence>
<evidence type="ECO:0007744" key="55">
    <source>
    </source>
</evidence>
<evidence type="ECO:0007744" key="56">
    <source>
    </source>
</evidence>
<evidence type="ECO:0007744" key="57">
    <source>
    </source>
</evidence>
<evidence type="ECO:0007744" key="58">
    <source>
    </source>
</evidence>
<evidence type="ECO:0007744" key="59">
    <source>
    </source>
</evidence>
<evidence type="ECO:0007829" key="60">
    <source>
        <dbReference type="PDB" id="3PRY"/>
    </source>
</evidence>
<evidence type="ECO:0007829" key="61">
    <source>
        <dbReference type="PDB" id="5UCH"/>
    </source>
</evidence>
<evidence type="ECO:0007829" key="62">
    <source>
        <dbReference type="PDB" id="6N8W"/>
    </source>
</evidence>
<evidence type="ECO:0007829" key="63">
    <source>
        <dbReference type="PDB" id="6N8Y"/>
    </source>
</evidence>
<evidence type="ECO:0007829" key="64">
    <source>
        <dbReference type="PDB" id="7Z38"/>
    </source>
</evidence>
<evidence type="ECO:0007829" key="65">
    <source>
        <dbReference type="PDB" id="7ZR0"/>
    </source>
</evidence>
<evidence type="ECO:0007829" key="66">
    <source>
        <dbReference type="PDB" id="8EOB"/>
    </source>
</evidence>
<evidence type="ECO:0007829" key="67">
    <source>
        <dbReference type="PDB" id="8GAE"/>
    </source>
</evidence>
<evidence type="ECO:0007829" key="68">
    <source>
        <dbReference type="PDB" id="8QMO"/>
    </source>
</evidence>
<proteinExistence type="evidence at protein level"/>
<name>HS90B_HUMAN</name>
<reference key="1">
    <citation type="journal article" date="1987" name="Gene">
        <title>Nucleotide sequence of a cDNA for a member of the human 90-kDa heat-shock protein family.</title>
        <authorList>
            <person name="Rebbe N.F."/>
            <person name="Ware J."/>
            <person name="Bertina R.M."/>
            <person name="Modrich P."/>
            <person name="Stafford D.W."/>
        </authorList>
    </citation>
    <scope>NUCLEOTIDE SEQUENCE [MRNA]</scope>
</reference>
<reference key="2">
    <citation type="journal article" date="1989" name="J. Biol. Chem.">
        <title>Nucleotide sequence and regulation of a human 90-kDa heat shock protein gene.</title>
        <authorList>
            <person name="Rebbe N.F."/>
            <person name="Hickman W.S."/>
            <person name="Ley T.J."/>
            <person name="Stafford D.W."/>
            <person name="Hickman S."/>
        </authorList>
    </citation>
    <scope>NUCLEOTIDE SEQUENCE [GENOMIC DNA]</scope>
</reference>
<reference key="3">
    <citation type="journal article" date="1988" name="Gene">
        <title>Heat-shock proteins, Hsp84 and Hsp86, of mice and men: two related genes encode formerly identified tumour-specific transplantation antigens.</title>
        <authorList>
            <person name="Hoffmann T."/>
            <person name="Hovemann B."/>
        </authorList>
    </citation>
    <scope>NUCLEOTIDE SEQUENCE [MRNA]</scope>
</reference>
<reference key="4">
    <citation type="submission" date="2003-08" db="EMBL/GenBank/DDBJ databases">
        <title>Cloning a new isoform of heat shock 90kDa in testis.</title>
        <authorList>
            <person name="Lu L."/>
            <person name="Huang X.Y."/>
            <person name="Yin L.L."/>
            <person name="Xu M."/>
            <person name="Li J.M."/>
            <person name="Zhou Z.M."/>
            <person name="Sha J.H."/>
        </authorList>
    </citation>
    <scope>NUCLEOTIDE SEQUENCE [MRNA]</scope>
    <source>
        <tissue>Testis</tissue>
    </source>
</reference>
<reference key="5">
    <citation type="journal article" date="2001" name="Genome Res.">
        <title>Towards a catalog of human genes and proteins: sequencing and analysis of 500 novel complete protein coding human cDNAs.</title>
        <authorList>
            <person name="Wiemann S."/>
            <person name="Weil B."/>
            <person name="Wellenreuther R."/>
            <person name="Gassenhuber J."/>
            <person name="Glassl S."/>
            <person name="Ansorge W."/>
            <person name="Boecher M."/>
            <person name="Bloecker H."/>
            <person name="Bauersachs S."/>
            <person name="Blum H."/>
            <person name="Lauber J."/>
            <person name="Duesterhoeft A."/>
            <person name="Beyer A."/>
            <person name="Koehrer K."/>
            <person name="Strack N."/>
            <person name="Mewes H.-W."/>
            <person name="Ottenwaelder B."/>
            <person name="Obermaier B."/>
            <person name="Tampe J."/>
            <person name="Heubner D."/>
            <person name="Wambutt R."/>
            <person name="Korn B."/>
            <person name="Klein M."/>
            <person name="Poustka A."/>
        </authorList>
    </citation>
    <scope>NUCLEOTIDE SEQUENCE [LARGE SCALE MRNA]</scope>
    <source>
        <tissue>Amygdala</tissue>
    </source>
</reference>
<reference key="6">
    <citation type="journal article" date="2004" name="Nat. Genet.">
        <title>Complete sequencing and characterization of 21,243 full-length human cDNAs.</title>
        <authorList>
            <person name="Ota T."/>
            <person name="Suzuki Y."/>
            <person name="Nishikawa T."/>
            <person name="Otsuki T."/>
            <person name="Sugiyama T."/>
            <person name="Irie R."/>
            <person name="Wakamatsu A."/>
            <person name="Hayashi K."/>
            <person name="Sato H."/>
            <person name="Nagai K."/>
            <person name="Kimura K."/>
            <person name="Makita H."/>
            <person name="Sekine M."/>
            <person name="Obayashi M."/>
            <person name="Nishi T."/>
            <person name="Shibahara T."/>
            <person name="Tanaka T."/>
            <person name="Ishii S."/>
            <person name="Yamamoto J."/>
            <person name="Saito K."/>
            <person name="Kawai Y."/>
            <person name="Isono Y."/>
            <person name="Nakamura Y."/>
            <person name="Nagahari K."/>
            <person name="Murakami K."/>
            <person name="Yasuda T."/>
            <person name="Iwayanagi T."/>
            <person name="Wagatsuma M."/>
            <person name="Shiratori A."/>
            <person name="Sudo H."/>
            <person name="Hosoiri T."/>
            <person name="Kaku Y."/>
            <person name="Kodaira H."/>
            <person name="Kondo H."/>
            <person name="Sugawara M."/>
            <person name="Takahashi M."/>
            <person name="Kanda K."/>
            <person name="Yokoi T."/>
            <person name="Furuya T."/>
            <person name="Kikkawa E."/>
            <person name="Omura Y."/>
            <person name="Abe K."/>
            <person name="Kamihara K."/>
            <person name="Katsuta N."/>
            <person name="Sato K."/>
            <person name="Tanikawa M."/>
            <person name="Yamazaki M."/>
            <person name="Ninomiya K."/>
            <person name="Ishibashi T."/>
            <person name="Yamashita H."/>
            <person name="Murakawa K."/>
            <person name="Fujimori K."/>
            <person name="Tanai H."/>
            <person name="Kimata M."/>
            <person name="Watanabe M."/>
            <person name="Hiraoka S."/>
            <person name="Chiba Y."/>
            <person name="Ishida S."/>
            <person name="Ono Y."/>
            <person name="Takiguchi S."/>
            <person name="Watanabe S."/>
            <person name="Yosida M."/>
            <person name="Hotuta T."/>
            <person name="Kusano J."/>
            <person name="Kanehori K."/>
            <person name="Takahashi-Fujii A."/>
            <person name="Hara H."/>
            <person name="Tanase T.-O."/>
            <person name="Nomura Y."/>
            <person name="Togiya S."/>
            <person name="Komai F."/>
            <person name="Hara R."/>
            <person name="Takeuchi K."/>
            <person name="Arita M."/>
            <person name="Imose N."/>
            <person name="Musashino K."/>
            <person name="Yuuki H."/>
            <person name="Oshima A."/>
            <person name="Sasaki N."/>
            <person name="Aotsuka S."/>
            <person name="Yoshikawa Y."/>
            <person name="Matsunawa H."/>
            <person name="Ichihara T."/>
            <person name="Shiohata N."/>
            <person name="Sano S."/>
            <person name="Moriya S."/>
            <person name="Momiyama H."/>
            <person name="Satoh N."/>
            <person name="Takami S."/>
            <person name="Terashima Y."/>
            <person name="Suzuki O."/>
            <person name="Nakagawa S."/>
            <person name="Senoh A."/>
            <person name="Mizoguchi H."/>
            <person name="Goto Y."/>
            <person name="Shimizu F."/>
            <person name="Wakebe H."/>
            <person name="Hishigaki H."/>
            <person name="Watanabe T."/>
            <person name="Sugiyama A."/>
            <person name="Takemoto M."/>
            <person name="Kawakami B."/>
            <person name="Yamazaki M."/>
            <person name="Watanabe K."/>
            <person name="Kumagai A."/>
            <person name="Itakura S."/>
            <person name="Fukuzumi Y."/>
            <person name="Fujimori Y."/>
            <person name="Komiyama M."/>
            <person name="Tashiro H."/>
            <person name="Tanigami A."/>
            <person name="Fujiwara T."/>
            <person name="Ono T."/>
            <person name="Yamada K."/>
            <person name="Fujii Y."/>
            <person name="Ozaki K."/>
            <person name="Hirao M."/>
            <person name="Ohmori Y."/>
            <person name="Kawabata A."/>
            <person name="Hikiji T."/>
            <person name="Kobatake N."/>
            <person name="Inagaki H."/>
            <person name="Ikema Y."/>
            <person name="Okamoto S."/>
            <person name="Okitani R."/>
            <person name="Kawakami T."/>
            <person name="Noguchi S."/>
            <person name="Itoh T."/>
            <person name="Shigeta K."/>
            <person name="Senba T."/>
            <person name="Matsumura K."/>
            <person name="Nakajima Y."/>
            <person name="Mizuno T."/>
            <person name="Morinaga M."/>
            <person name="Sasaki M."/>
            <person name="Togashi T."/>
            <person name="Oyama M."/>
            <person name="Hata H."/>
            <person name="Watanabe M."/>
            <person name="Komatsu T."/>
            <person name="Mizushima-Sugano J."/>
            <person name="Satoh T."/>
            <person name="Shirai Y."/>
            <person name="Takahashi Y."/>
            <person name="Nakagawa K."/>
            <person name="Okumura K."/>
            <person name="Nagase T."/>
            <person name="Nomura N."/>
            <person name="Kikuchi H."/>
            <person name="Masuho Y."/>
            <person name="Yamashita R."/>
            <person name="Nakai K."/>
            <person name="Yada T."/>
            <person name="Nakamura Y."/>
            <person name="Ohara O."/>
            <person name="Isogai T."/>
            <person name="Sugano S."/>
        </authorList>
    </citation>
    <scope>NUCLEOTIDE SEQUENCE [LARGE SCALE MRNA]</scope>
</reference>
<reference key="7">
    <citation type="submission" date="2005-12" db="EMBL/GenBank/DDBJ databases">
        <authorList>
            <consortium name="NHLBI resequencing and genotyping service (RS&amp;G)"/>
        </authorList>
    </citation>
    <scope>NUCLEOTIDE SEQUENCE [GENOMIC DNA]</scope>
</reference>
<reference key="8">
    <citation type="journal article" date="2003" name="Nature">
        <title>The DNA sequence and analysis of human chromosome 6.</title>
        <authorList>
            <person name="Mungall A.J."/>
            <person name="Palmer S.A."/>
            <person name="Sims S.K."/>
            <person name="Edwards C.A."/>
            <person name="Ashurst J.L."/>
            <person name="Wilming L."/>
            <person name="Jones M.C."/>
            <person name="Horton R."/>
            <person name="Hunt S.E."/>
            <person name="Scott C.E."/>
            <person name="Gilbert J.G.R."/>
            <person name="Clamp M.E."/>
            <person name="Bethel G."/>
            <person name="Milne S."/>
            <person name="Ainscough R."/>
            <person name="Almeida J.P."/>
            <person name="Ambrose K.D."/>
            <person name="Andrews T.D."/>
            <person name="Ashwell R.I.S."/>
            <person name="Babbage A.K."/>
            <person name="Bagguley C.L."/>
            <person name="Bailey J."/>
            <person name="Banerjee R."/>
            <person name="Barker D.J."/>
            <person name="Barlow K.F."/>
            <person name="Bates K."/>
            <person name="Beare D.M."/>
            <person name="Beasley H."/>
            <person name="Beasley O."/>
            <person name="Bird C.P."/>
            <person name="Blakey S.E."/>
            <person name="Bray-Allen S."/>
            <person name="Brook J."/>
            <person name="Brown A.J."/>
            <person name="Brown J.Y."/>
            <person name="Burford D.C."/>
            <person name="Burrill W."/>
            <person name="Burton J."/>
            <person name="Carder C."/>
            <person name="Carter N.P."/>
            <person name="Chapman J.C."/>
            <person name="Clark S.Y."/>
            <person name="Clark G."/>
            <person name="Clee C.M."/>
            <person name="Clegg S."/>
            <person name="Cobley V."/>
            <person name="Collier R.E."/>
            <person name="Collins J.E."/>
            <person name="Colman L.K."/>
            <person name="Corby N.R."/>
            <person name="Coville G.J."/>
            <person name="Culley K.M."/>
            <person name="Dhami P."/>
            <person name="Davies J."/>
            <person name="Dunn M."/>
            <person name="Earthrowl M.E."/>
            <person name="Ellington A.E."/>
            <person name="Evans K.A."/>
            <person name="Faulkner L."/>
            <person name="Francis M.D."/>
            <person name="Frankish A."/>
            <person name="Frankland J."/>
            <person name="French L."/>
            <person name="Garner P."/>
            <person name="Garnett J."/>
            <person name="Ghori M.J."/>
            <person name="Gilby L.M."/>
            <person name="Gillson C.J."/>
            <person name="Glithero R.J."/>
            <person name="Grafham D.V."/>
            <person name="Grant M."/>
            <person name="Gribble S."/>
            <person name="Griffiths C."/>
            <person name="Griffiths M.N.D."/>
            <person name="Hall R."/>
            <person name="Halls K.S."/>
            <person name="Hammond S."/>
            <person name="Harley J.L."/>
            <person name="Hart E.A."/>
            <person name="Heath P.D."/>
            <person name="Heathcott R."/>
            <person name="Holmes S.J."/>
            <person name="Howden P.J."/>
            <person name="Howe K.L."/>
            <person name="Howell G.R."/>
            <person name="Huckle E."/>
            <person name="Humphray S.J."/>
            <person name="Humphries M.D."/>
            <person name="Hunt A.R."/>
            <person name="Johnson C.M."/>
            <person name="Joy A.A."/>
            <person name="Kay M."/>
            <person name="Keenan S.J."/>
            <person name="Kimberley A.M."/>
            <person name="King A."/>
            <person name="Laird G.K."/>
            <person name="Langford C."/>
            <person name="Lawlor S."/>
            <person name="Leongamornlert D.A."/>
            <person name="Leversha M."/>
            <person name="Lloyd C.R."/>
            <person name="Lloyd D.M."/>
            <person name="Loveland J.E."/>
            <person name="Lovell J."/>
            <person name="Martin S."/>
            <person name="Mashreghi-Mohammadi M."/>
            <person name="Maslen G.L."/>
            <person name="Matthews L."/>
            <person name="McCann O.T."/>
            <person name="McLaren S.J."/>
            <person name="McLay K."/>
            <person name="McMurray A."/>
            <person name="Moore M.J.F."/>
            <person name="Mullikin J.C."/>
            <person name="Niblett D."/>
            <person name="Nickerson T."/>
            <person name="Novik K.L."/>
            <person name="Oliver K."/>
            <person name="Overton-Larty E.K."/>
            <person name="Parker A."/>
            <person name="Patel R."/>
            <person name="Pearce A.V."/>
            <person name="Peck A.I."/>
            <person name="Phillimore B.J.C.T."/>
            <person name="Phillips S."/>
            <person name="Plumb R.W."/>
            <person name="Porter K.M."/>
            <person name="Ramsey Y."/>
            <person name="Ranby S.A."/>
            <person name="Rice C.M."/>
            <person name="Ross M.T."/>
            <person name="Searle S.M."/>
            <person name="Sehra H.K."/>
            <person name="Sheridan E."/>
            <person name="Skuce C.D."/>
            <person name="Smith S."/>
            <person name="Smith M."/>
            <person name="Spraggon L."/>
            <person name="Squares S.L."/>
            <person name="Steward C.A."/>
            <person name="Sycamore N."/>
            <person name="Tamlyn-Hall G."/>
            <person name="Tester J."/>
            <person name="Theaker A.J."/>
            <person name="Thomas D.W."/>
            <person name="Thorpe A."/>
            <person name="Tracey A."/>
            <person name="Tromans A."/>
            <person name="Tubby B."/>
            <person name="Wall M."/>
            <person name="Wallis J.M."/>
            <person name="West A.P."/>
            <person name="White S.S."/>
            <person name="Whitehead S.L."/>
            <person name="Whittaker H."/>
            <person name="Wild A."/>
            <person name="Willey D.J."/>
            <person name="Wilmer T.E."/>
            <person name="Wood J.M."/>
            <person name="Wray P.W."/>
            <person name="Wyatt J.C."/>
            <person name="Young L."/>
            <person name="Younger R.M."/>
            <person name="Bentley D.R."/>
            <person name="Coulson A."/>
            <person name="Durbin R.M."/>
            <person name="Hubbard T."/>
            <person name="Sulston J.E."/>
            <person name="Dunham I."/>
            <person name="Rogers J."/>
            <person name="Beck S."/>
        </authorList>
    </citation>
    <scope>NUCLEOTIDE SEQUENCE [LARGE SCALE GENOMIC DNA]</scope>
</reference>
<reference key="9">
    <citation type="submission" date="2005-07" db="EMBL/GenBank/DDBJ databases">
        <authorList>
            <person name="Mural R.J."/>
            <person name="Istrail S."/>
            <person name="Sutton G.G."/>
            <person name="Florea L."/>
            <person name="Halpern A.L."/>
            <person name="Mobarry C.M."/>
            <person name="Lippert R."/>
            <person name="Walenz B."/>
            <person name="Shatkay H."/>
            <person name="Dew I."/>
            <person name="Miller J.R."/>
            <person name="Flanigan M.J."/>
            <person name="Edwards N.J."/>
            <person name="Bolanos R."/>
            <person name="Fasulo D."/>
            <person name="Halldorsson B.V."/>
            <person name="Hannenhalli S."/>
            <person name="Turner R."/>
            <person name="Yooseph S."/>
            <person name="Lu F."/>
            <person name="Nusskern D.R."/>
            <person name="Shue B.C."/>
            <person name="Zheng X.H."/>
            <person name="Zhong F."/>
            <person name="Delcher A.L."/>
            <person name="Huson D.H."/>
            <person name="Kravitz S.A."/>
            <person name="Mouchard L."/>
            <person name="Reinert K."/>
            <person name="Remington K.A."/>
            <person name="Clark A.G."/>
            <person name="Waterman M.S."/>
            <person name="Eichler E.E."/>
            <person name="Adams M.D."/>
            <person name="Hunkapiller M.W."/>
            <person name="Myers E.W."/>
            <person name="Venter J.C."/>
        </authorList>
    </citation>
    <scope>NUCLEOTIDE SEQUENCE [LARGE SCALE GENOMIC DNA]</scope>
</reference>
<reference key="10">
    <citation type="journal article" date="2004" name="Genome Res.">
        <title>The status, quality, and expansion of the NIH full-length cDNA project: the Mammalian Gene Collection (MGC).</title>
        <authorList>
            <consortium name="The MGC Project Team"/>
        </authorList>
    </citation>
    <scope>NUCLEOTIDE SEQUENCE [LARGE SCALE MRNA]</scope>
    <source>
        <tissue>Colon</tissue>
        <tissue>Lymph</tissue>
        <tissue>Muscle</tissue>
        <tissue>Skin</tissue>
        <tissue>Testis</tissue>
    </source>
</reference>
<reference key="11">
    <citation type="journal article" date="1989" name="J. Biol. Chem.">
        <title>Two human 90-kDa heat shock proteins are phosphorylated in vivo at conserved serines that are phosphorylated in vitro by casein kinase II.</title>
        <authorList>
            <person name="Lees-Miller S.P."/>
            <person name="Anderson C.W."/>
        </authorList>
    </citation>
    <scope>PROTEIN SEQUENCE OF 2-21</scope>
    <scope>PHOSPHORYLATION</scope>
</reference>
<reference key="12">
    <citation type="submission" date="2009-03" db="UniProtKB">
        <authorList>
            <person name="Bienvenut W.V."/>
            <person name="Waridel P."/>
            <person name="Quadroni M."/>
        </authorList>
    </citation>
    <scope>PROTEIN SEQUENCE OF 42-107; 149-168; 181-197; 204-221; 250-265; 274-284; 292-348; 360-392; 412-427; 439-448; 450-475; 482-502; 506-526; 539-551; 584-604; 613-639 AND 653-679</scope>
    <scope>PHOSPHORYLATION AT SER-255</scope>
    <scope>IDENTIFICATION BY MASS SPECTROMETRY</scope>
    <source>
        <tissue>Embryonic kidney</tissue>
    </source>
</reference>
<reference key="13">
    <citation type="journal article" date="1994" name="Mamm. Genome">
        <title>A cosmid clone at the D6S182 locus on human chromosome 6p12 contains the 90-kDa heat shock protein beta gene (HSP90 beta).</title>
        <authorList>
            <person name="Takahashi I."/>
            <person name="Tanuma R."/>
            <person name="Hirata M."/>
            <person name="Hashimoto K."/>
        </authorList>
    </citation>
    <scope>NUCLEOTIDE SEQUENCE [GENOMIC DNA] OF 50-118</scope>
</reference>
<reference key="14">
    <citation type="submission" date="2011-07" db="EMBL/GenBank/DDBJ databases">
        <authorList>
            <person name="Takahashi I."/>
            <person name="Tanuma R."/>
            <person name="Hirata M."/>
            <person name="Hashimoto K."/>
        </authorList>
    </citation>
    <scope>SEQUENCE REVISION</scope>
</reference>
<reference key="15">
    <citation type="journal article" date="1997" name="Electrophoresis">
        <title>A two-dimensional gel database of human colon carcinoma proteins.</title>
        <authorList>
            <person name="Ji H."/>
            <person name="Reid G.E."/>
            <person name="Moritz R.L."/>
            <person name="Eddes J.S."/>
            <person name="Burgess A.W."/>
            <person name="Simpson R.J."/>
        </authorList>
    </citation>
    <scope>PROTEIN SEQUENCE OF 54-64 AND 187-199</scope>
    <source>
        <tissue>Colon carcinoma</tissue>
    </source>
</reference>
<reference key="16">
    <citation type="submission" date="2000-06" db="EMBL/GenBank/DDBJ databases">
        <title>Novel sequence for human Hsp90 beta giving a substitution of R55T (R147 in original sequence) and M85R (M177 in original sequence).</title>
        <authorList>
            <person name="Mason A."/>
            <person name="O'Connor D."/>
            <person name="Greenhalf W."/>
        </authorList>
    </citation>
    <scope>NUCLEOTIDE SEQUENCE [MRNA] OF 93-724</scope>
    <source>
        <tissue>Pancreas</tissue>
    </source>
</reference>
<reference key="17">
    <citation type="journal article" date="1995" name="Eur. J. Biochem.">
        <title>Mechanism of dimer formation of the 90-kDa heat-shock protein.</title>
        <authorList>
            <person name="Nemoto T."/>
            <person name="Ohara-Nemoto Y."/>
            <person name="Ota M."/>
            <person name="Takagi T."/>
            <person name="Yokoyama K."/>
        </authorList>
    </citation>
    <scope>HOMODIMERIZATION</scope>
</reference>
<reference key="18">
    <citation type="journal article" date="1998" name="Oncogene">
        <title>Active cdk6 complexes are predominantly nuclear and represent only a minority of the cdk6 in T cells.</title>
        <authorList>
            <person name="Mahony D."/>
            <person name="Parry D.A."/>
            <person name="Lees E."/>
        </authorList>
    </citation>
    <scope>SUBCELLULAR LOCATION</scope>
    <scope>INTERACTION WITH CDK6 AND CDC37</scope>
</reference>
<reference key="19">
    <citation type="journal article" date="2003" name="Nature">
        <title>Proteomic characterization of the human centrosome by protein correlation profiling.</title>
        <authorList>
            <person name="Andersen J.S."/>
            <person name="Wilkinson C.J."/>
            <person name="Mayor T."/>
            <person name="Mortensen P."/>
            <person name="Nigg E.A."/>
            <person name="Mann M."/>
        </authorList>
    </citation>
    <scope>IDENTIFICATION BY MASS SPECTROMETRY</scope>
    <source>
        <tissue>Lymphoblast</tissue>
    </source>
</reference>
<reference key="20">
    <citation type="journal article" date="2004" name="Biochemistry">
        <title>Phosphorylation analysis of 90 kDa heat shock protein within the cytosolic arylhydrocarbon receptor complex.</title>
        <authorList>
            <person name="Ogiso H."/>
            <person name="Kagi N."/>
            <person name="Matsumoto E."/>
            <person name="Nishimoto M."/>
            <person name="Arai R."/>
            <person name="Shirouzu M."/>
            <person name="Mimura J."/>
            <person name="Fujii-Kuriyama Y."/>
            <person name="Yokoyama S."/>
        </authorList>
    </citation>
    <scope>PHOSPHORYLATION AT SER-226 AND SER-255</scope>
    <scope>MUTAGENESIS OF SER-226 AND SER-255</scope>
    <scope>INTERACTION WITH AHR</scope>
</reference>
<reference key="21">
    <citation type="journal article" date="2004" name="J. Biol. Chem.">
        <title>Hsp90 regulates the activity of wild type p53 under physiological and elevated temperatures.</title>
        <authorList>
            <person name="Mueller L."/>
            <person name="Schaupp A."/>
            <person name="Walerych D."/>
            <person name="Wegele H."/>
            <person name="Buchner J."/>
        </authorList>
    </citation>
    <scope>INTERACTION WITH TP53</scope>
    <scope>REGION</scope>
</reference>
<reference key="22">
    <citation type="journal article" date="2005" name="Biochem. Biophys. Res. Commun.">
        <title>Proteomic identification of proteins conjugated to ISG15 in mouse and human cells.</title>
        <authorList>
            <person name="Giannakopoulos N.V."/>
            <person name="Luo J.K."/>
            <person name="Papov V."/>
            <person name="Zou W."/>
            <person name="Lenschow D.J."/>
            <person name="Jacobs B.S."/>
            <person name="Borden E.C."/>
            <person name="Li J."/>
            <person name="Virgin H.W."/>
            <person name="Zhang D.E."/>
        </authorList>
    </citation>
    <scope>ISGYLATION</scope>
</reference>
<reference key="23">
    <citation type="journal article" date="2005" name="Nat. Biotechnol.">
        <title>Immunoaffinity profiling of tyrosine phosphorylation in cancer cells.</title>
        <authorList>
            <person name="Rush J."/>
            <person name="Moritz A."/>
            <person name="Lee K.A."/>
            <person name="Guo A."/>
            <person name="Goss V.L."/>
            <person name="Spek E.J."/>
            <person name="Zhang H."/>
            <person name="Zha X.-M."/>
            <person name="Polakiewicz R.D."/>
            <person name="Comb M.J."/>
        </authorList>
    </citation>
    <scope>IDENTIFICATION BY MASS SPECTROMETRY [LARGE SCALE ANALYSIS]</scope>
</reference>
<reference key="24">
    <citation type="journal article" date="2006" name="Biochem. Biophys. Res. Commun.">
        <title>SGT, a Hsp90beta binding partner, is accumulated in the nucleus during cell apoptosis.</title>
        <authorList>
            <person name="Yin H."/>
            <person name="Wang H."/>
            <person name="Zong H."/>
            <person name="Chen X."/>
            <person name="Wang Y."/>
            <person name="Yun X."/>
            <person name="Wu Y."/>
            <person name="Wang J."/>
            <person name="Gu J."/>
        </authorList>
    </citation>
    <scope>INTERACTION WITH SGTA</scope>
    <scope>SUBCELLULAR LOCATION</scope>
</reference>
<reference key="25">
    <citation type="journal article" date="2006" name="Cell">
        <title>Global, in vivo, and site-specific phosphorylation dynamics in signaling networks.</title>
        <authorList>
            <person name="Olsen J.V."/>
            <person name="Blagoev B."/>
            <person name="Gnad F."/>
            <person name="Macek B."/>
            <person name="Kumar C."/>
            <person name="Mortensen P."/>
            <person name="Mann M."/>
        </authorList>
    </citation>
    <scope>PHOSPHORYLATION [LARGE SCALE ANALYSIS] AT SER-255</scope>
    <scope>IDENTIFICATION BY MASS SPECTROMETRY [LARGE SCALE ANALYSIS]</scope>
    <source>
        <tissue>Cervix carcinoma</tissue>
    </source>
</reference>
<reference key="26">
    <citation type="journal article" date="2006" name="J. Proteome Res.">
        <title>Proteomic and bioinformatic characterization of the biogenesis and function of melanosomes.</title>
        <authorList>
            <person name="Chi A."/>
            <person name="Valencia J.C."/>
            <person name="Hu Z.-Z."/>
            <person name="Watabe H."/>
            <person name="Yamaguchi H."/>
            <person name="Mangini N.J."/>
            <person name="Huang H."/>
            <person name="Canfield V.A."/>
            <person name="Cheng K.C."/>
            <person name="Yang F."/>
            <person name="Abe R."/>
            <person name="Yamagishi S."/>
            <person name="Shabanowitz J."/>
            <person name="Hearing V.J."/>
            <person name="Wu C."/>
            <person name="Appella E."/>
            <person name="Hunt D.F."/>
        </authorList>
    </citation>
    <scope>SUBCELLULAR LOCATION [LARGE SCALE ANALYSIS]</scope>
    <source>
        <tissue>Melanoma</tissue>
    </source>
</reference>
<reference key="27">
    <citation type="journal article" date="2006" name="Mol. Cell. Biol.">
        <title>GCUNC-45 is a novel regulator for the progesterone receptor/hsp90 chaperoning pathway.</title>
        <authorList>
            <person name="Chadli A."/>
            <person name="Graham J.D."/>
            <person name="Abel M.G."/>
            <person name="Jackson T.A."/>
            <person name="Gordon D.F."/>
            <person name="Wood W.M."/>
            <person name="Felts S.J."/>
            <person name="Horwitz K.B."/>
            <person name="Toft D."/>
        </authorList>
    </citation>
    <scope>FUNCTION</scope>
    <scope>INTERACTION WITH UNC45A</scope>
</reference>
<reference key="28">
    <citation type="journal article" date="2007" name="Science">
        <title>ATM and ATR substrate analysis reveals extensive protein networks responsive to DNA damage.</title>
        <authorList>
            <person name="Matsuoka S."/>
            <person name="Ballif B.A."/>
            <person name="Smogorzewska A."/>
            <person name="McDonald E.R. III"/>
            <person name="Hurov K.E."/>
            <person name="Luo J."/>
            <person name="Bakalarski C.E."/>
            <person name="Zhao Z."/>
            <person name="Solimini N."/>
            <person name="Lerenthal Y."/>
            <person name="Shiloh Y."/>
            <person name="Gygi S.P."/>
            <person name="Elledge S.J."/>
        </authorList>
    </citation>
    <scope>PHOSPHORYLATION [LARGE SCALE ANALYSIS] AT THR-297</scope>
    <scope>IDENTIFICATION BY MASS SPECTROMETRY [LARGE SCALE ANALYSIS]</scope>
    <source>
        <tissue>Embryonic kidney</tissue>
    </source>
</reference>
<reference key="29">
    <citation type="journal article" date="2008" name="Biochem. J.">
        <title>Two different classes of E2 ubiquitin-conjugating enzymes are required for the mono-ubiquitination of proteins and elongation by polyubiquitin chains with a specific topology.</title>
        <authorList>
            <person name="Windheim M."/>
            <person name="Peggie M."/>
            <person name="Cohen P."/>
        </authorList>
    </citation>
    <scope>UBIQUITINATION</scope>
</reference>
<reference key="30">
    <citation type="journal article" date="2008" name="Biochemistry">
        <title>Role of the cochaperone Tpr2 in Hsp90 chaperoning.</title>
        <authorList>
            <person name="Moffatt N.S."/>
            <person name="Bruinsma E."/>
            <person name="Uhl C."/>
            <person name="Obermann W.M."/>
            <person name="Toft D."/>
        </authorList>
    </citation>
    <scope>INTERACTION WITH DNAJC7</scope>
</reference>
<reference key="31">
    <citation type="journal article" date="2008" name="Cell Death Differ.">
        <title>Interaction of heat-shock protein 90 beta isoform (HSP90 beta) with cellular inhibitor of apoptosis 1 (c-IAP1) is required for cell differentiation.</title>
        <authorList>
            <person name="Didelot C."/>
            <person name="Lanneau D."/>
            <person name="Brunet M."/>
            <person name="Bouchot A."/>
            <person name="Cartier J."/>
            <person name="Jacquel A."/>
            <person name="Ducoroy P."/>
            <person name="Cathelin S."/>
            <person name="Decologne N."/>
            <person name="Chiosis G."/>
            <person name="Dubrez-Daloz L."/>
            <person name="Solary E."/>
            <person name="Garrido C."/>
        </authorList>
    </citation>
    <scope>IDENTIFICATION BY MASS SPECTROMETRY</scope>
    <scope>INTERACTION WITH BIRC2</scope>
    <scope>SUBCELLULAR LOCATION</scope>
    <scope>FUNCTION</scope>
</reference>
<reference key="32">
    <citation type="journal article" date="2008" name="J. Biol. Chem.">
        <title>Conserved conformational changes in the ATPase cycle of human Hsp90.</title>
        <authorList>
            <person name="Richter K."/>
            <person name="Soroka J."/>
            <person name="Skalniak L."/>
            <person name="Leskovar A."/>
            <person name="Hessling M."/>
            <person name="Reinstein J."/>
            <person name="Buchner J."/>
        </authorList>
    </citation>
    <scope>SUBUNIT</scope>
    <scope>ACTIVITY REGULATION</scope>
    <scope>BIOPHYSICOCHEMICAL PROPERTIES</scope>
</reference>
<reference key="33">
    <citation type="journal article" date="2008" name="J. Proteome Res.">
        <title>Phosphoproteome of resting human platelets.</title>
        <authorList>
            <person name="Zahedi R.P."/>
            <person name="Lewandrowski U."/>
            <person name="Wiesner J."/>
            <person name="Wortelkamp S."/>
            <person name="Moebius J."/>
            <person name="Schuetz C."/>
            <person name="Walter U."/>
            <person name="Gambaryan S."/>
            <person name="Sickmann A."/>
        </authorList>
    </citation>
    <scope>PHOSPHORYLATION [LARGE SCALE ANALYSIS] AT SER-226</scope>
    <scope>IDENTIFICATION BY MASS SPECTROMETRY [LARGE SCALE ANALYSIS]</scope>
    <source>
        <tissue>Platelet</tissue>
    </source>
</reference>
<reference key="34">
    <citation type="journal article" date="2008" name="PLoS ONE">
        <title>The human TPR protein TTC4 is a putative Hsp90 co-chaperone which interacts with CDC6 and shows alterations in transformed cells.</title>
        <authorList>
            <person name="Crevel G."/>
            <person name="Bennett D."/>
            <person name="Cotterill S."/>
        </authorList>
    </citation>
    <scope>INTERACTION WITH TTC4</scope>
</reference>
<reference key="35">
    <citation type="journal article" date="2008" name="Proc. Natl. Acad. Sci. U.S.A.">
        <title>A quantitative atlas of mitotic phosphorylation.</title>
        <authorList>
            <person name="Dephoure N."/>
            <person name="Zhou C."/>
            <person name="Villen J."/>
            <person name="Beausoleil S.A."/>
            <person name="Bakalarski C.E."/>
            <person name="Elledge S.J."/>
            <person name="Gygi S.P."/>
        </authorList>
    </citation>
    <scope>PHOSPHORYLATION [LARGE SCALE ANALYSIS] AT SER-307</scope>
    <scope>IDENTIFICATION BY MASS SPECTROMETRY [LARGE SCALE ANALYSIS]</scope>
    <source>
        <tissue>Cervix carcinoma</tissue>
    </source>
</reference>
<reference key="36">
    <citation type="journal article" date="2008" name="Proteomics">
        <title>Large-scale phosphoproteome analysis of human liver tissue by enrichment and fractionation of phosphopeptides with strong anion exchange chromatography.</title>
        <authorList>
            <person name="Han G."/>
            <person name="Ye M."/>
            <person name="Zhou H."/>
            <person name="Jiang X."/>
            <person name="Feng S."/>
            <person name="Jiang X."/>
            <person name="Tian R."/>
            <person name="Wan D."/>
            <person name="Zou H."/>
            <person name="Gu J."/>
        </authorList>
    </citation>
    <scope>PHOSPHORYLATION [LARGE SCALE ANALYSIS] AT SER-226</scope>
    <scope>IDENTIFICATION BY MASS SPECTROMETRY [LARGE SCALE ANALYSIS]</scope>
    <source>
        <tissue>Liver</tissue>
    </source>
</reference>
<reference key="37">
    <citation type="journal article" date="2009" name="Cell Stress Chaperones">
        <title>Guidelines for the nomenclature of the human heat shock proteins.</title>
        <authorList>
            <person name="Kampinga H.H."/>
            <person name="Hageman J."/>
            <person name="Vos M.J."/>
            <person name="Kubota H."/>
            <person name="Tanguay R.M."/>
            <person name="Bruford E.A."/>
            <person name="Cheetham M.E."/>
            <person name="Chen B."/>
            <person name="Hightower L.E."/>
        </authorList>
    </citation>
    <scope>NOMENCLATURE</scope>
</reference>
<reference key="38">
    <citation type="journal article" date="2009" name="EMBO Rep.">
        <title>Hsp90 is regulated by a switch point in the C-terminal domain.</title>
        <authorList>
            <person name="Retzlaff M."/>
            <person name="Stahl M."/>
            <person name="Eberl H.C."/>
            <person name="Lagleder S."/>
            <person name="Beck J."/>
            <person name="Kessler H."/>
            <person name="Buchner J."/>
        </authorList>
    </citation>
    <scope>FUNCTION</scope>
    <scope>S-NITROSYLATION AT CYS-590</scope>
    <scope>MUTAGENESIS OF CYS-590</scope>
</reference>
<reference key="39">
    <citation type="journal article" date="2009" name="Science">
        <title>Lysine acetylation targets protein complexes and co-regulates major cellular functions.</title>
        <authorList>
            <person name="Choudhary C."/>
            <person name="Kumar C."/>
            <person name="Gnad F."/>
            <person name="Nielsen M.L."/>
            <person name="Rehman M."/>
            <person name="Walther T.C."/>
            <person name="Olsen J.V."/>
            <person name="Mann M."/>
        </authorList>
    </citation>
    <scope>ACETYLATION [LARGE SCALE ANALYSIS] AT LYS-435 AND LYS-481</scope>
    <scope>IDENTIFICATION BY MASS SPECTROMETRY [LARGE SCALE ANALYSIS]</scope>
</reference>
<reference key="40">
    <citation type="journal article" date="2010" name="Biochem. Biophys. Res. Commun.">
        <title>Extracellular heat shock protein HSP90beta secreted by MG63 osteosarcoma cells inhibits activation of latent TGF-beta1.</title>
        <authorList>
            <person name="Suzuki S."/>
            <person name="Kulkarni A.B."/>
        </authorList>
    </citation>
    <scope>INTERACTION WITH TGFB1 PROCESSED FORM (LAP)</scope>
    <scope>SUBCELLULAR LOCATION</scope>
</reference>
<reference key="41">
    <citation type="journal article" date="2010" name="Cell. Signal.">
        <title>Stat1 mediates an auto-regulation of hsp90beta gene in heat shock response.</title>
        <authorList>
            <person name="Cheng M.B."/>
            <person name="Zhang Y."/>
            <person name="Zhong X."/>
            <person name="Sutter B."/>
            <person name="Cao C.Y."/>
            <person name="Chen X.S."/>
            <person name="Cheng X.K."/>
            <person name="Zhang Y."/>
            <person name="Xiao L."/>
            <person name="Shen Y.F."/>
        </authorList>
    </citation>
    <scope>INTERACTION WITH HSP90AA1; JAK2 AND PRKCE</scope>
    <scope>INDUCTION</scope>
    <scope>FUNCTION</scope>
</reference>
<reference key="42">
    <citation type="journal article" date="2010" name="Sci. Signal.">
        <title>Quantitative phosphoproteomics reveals widespread full phosphorylation site occupancy during mitosis.</title>
        <authorList>
            <person name="Olsen J.V."/>
            <person name="Vermeulen M."/>
            <person name="Santamaria A."/>
            <person name="Kumar C."/>
            <person name="Miller M.L."/>
            <person name="Jensen L.J."/>
            <person name="Gnad F."/>
            <person name="Cox J."/>
            <person name="Jensen T.S."/>
            <person name="Nigg E.A."/>
            <person name="Brunak S."/>
            <person name="Mann M."/>
        </authorList>
    </citation>
    <scope>PHOSPHORYLATION [LARGE SCALE ANALYSIS] AT SER-226</scope>
    <scope>IDENTIFICATION BY MASS SPECTROMETRY [LARGE SCALE ANALYSIS]</scope>
    <source>
        <tissue>Cervix carcinoma</tissue>
    </source>
</reference>
<reference key="43">
    <citation type="journal article" date="2011" name="BMC Syst. Biol.">
        <title>Initial characterization of the human central proteome.</title>
        <authorList>
            <person name="Burkard T.R."/>
            <person name="Planyavsky M."/>
            <person name="Kaupe I."/>
            <person name="Breitwieser F.P."/>
            <person name="Buerckstuemmer T."/>
            <person name="Bennett K.L."/>
            <person name="Superti-Furga G."/>
            <person name="Colinge J."/>
        </authorList>
    </citation>
    <scope>IDENTIFICATION BY MASS SPECTROMETRY [LARGE SCALE ANALYSIS]</scope>
</reference>
<reference key="44">
    <citation type="journal article" date="2011" name="Mol. Cell. Proteomics">
        <title>The first identification of lysine malonylation substrates and its regulatory enzyme.</title>
        <authorList>
            <person name="Peng C."/>
            <person name="Lu Z."/>
            <person name="Xie Z."/>
            <person name="Cheng Z."/>
            <person name="Chen Y."/>
            <person name="Tan M."/>
            <person name="Luo H."/>
            <person name="Zhang Y."/>
            <person name="He W."/>
            <person name="Yang K."/>
            <person name="Zwaans B.M."/>
            <person name="Tishkoff D."/>
            <person name="Ho L."/>
            <person name="Lombard D."/>
            <person name="He T.C."/>
            <person name="Dai J."/>
            <person name="Verdin E."/>
            <person name="Ye Y."/>
            <person name="Zhao Y."/>
        </authorList>
    </citation>
    <scope>MALONYLATION AT LYS-399</scope>
</reference>
<reference key="45">
    <citation type="journal article" date="2011" name="PLoS ONE">
        <title>The soluble recombinant Neisseria meningitidis adhesin NadA(Delta351-405) stimulates human monocytes by binding to extracellular Hsp90.</title>
        <authorList>
            <person name="Cecchini P."/>
            <person name="Tavano R."/>
            <person name="Polverino de Laureto P."/>
            <person name="Franzoso S."/>
            <person name="Mazzon C."/>
            <person name="Montanari P."/>
            <person name="Papini E."/>
        </authorList>
    </citation>
    <scope>FUNCTION (MICROBIAL INFECTION)</scope>
    <scope>INTERACTION WITH N.MENINGITIDIS ADHESIN A (MICROBIAL INFECTION)</scope>
    <scope>SUBCELLULAR LOCATION</scope>
</reference>
<reference key="46">
    <citation type="journal article" date="2011" name="PLoS ONE">
        <title>An interaction network predicted from public data as a discovery tool: application to the Hsp90 molecular chaperone machine.</title>
        <authorList>
            <person name="Echeverria P.C."/>
            <person name="Bernthaler A."/>
            <person name="Dupuis P."/>
            <person name="Mayer B."/>
            <person name="Picard D."/>
        </authorList>
    </citation>
    <scope>INTERACTION WITH AHSA1 AND XPO1</scope>
</reference>
<reference key="47">
    <citation type="journal article" date="2011" name="Sci. Signal.">
        <title>System-wide temporal characterization of the proteome and phosphoproteome of human embryonic stem cell differentiation.</title>
        <authorList>
            <person name="Rigbolt K.T."/>
            <person name="Prokhorova T.A."/>
            <person name="Akimov V."/>
            <person name="Henningsen J."/>
            <person name="Johansen P.T."/>
            <person name="Kratchmarova I."/>
            <person name="Kassem M."/>
            <person name="Mann M."/>
            <person name="Olsen J.V."/>
            <person name="Blagoev B."/>
        </authorList>
    </citation>
    <scope>PHOSPHORYLATION [LARGE SCALE ANALYSIS] AT SER-226</scope>
    <scope>IDENTIFICATION BY MASS SPECTROMETRY [LARGE SCALE ANALYSIS]</scope>
</reference>
<reference key="48">
    <citation type="journal article" date="2012" name="Biochim. Biophys. Acta">
        <title>Investigation on PLK2 and PLK3 substrate recognition.</title>
        <authorList>
            <person name="Salvi M."/>
            <person name="Trashi E."/>
            <person name="Cozza G."/>
            <person name="Franchin C."/>
            <person name="Arrigoni G."/>
            <person name="Pinna L.A."/>
        </authorList>
    </citation>
    <scope>PHOSPHORYLATION AT SER-718 BY PLK2 AND PLK3</scope>
</reference>
<reference key="49">
    <citation type="journal article" date="2012" name="Hum. Mol. Genet.">
        <title>Hsp90 stabilizes Cdc25A and counteracts heat shock-mediated Cdc25A degradation and cell-cycle attenuation in pancreatic carcinoma cells.</title>
        <authorList>
            <person name="Giessrigl B."/>
            <person name="Krieger S."/>
            <person name="Rosner M."/>
            <person name="Huttary N."/>
            <person name="Saiko P."/>
            <person name="Alami M."/>
            <person name="Messaoudi S."/>
            <person name="Peyrat J.F."/>
            <person name="Maciuk A."/>
            <person name="Gollinger M."/>
            <person name="Kopf S."/>
            <person name="Kazlauskas E."/>
            <person name="Mazal P."/>
            <person name="Szekeres T."/>
            <person name="Hengstschlaeger M."/>
            <person name="Matulis D."/>
            <person name="Jaeger W."/>
            <person name="Krupitza G."/>
        </authorList>
    </citation>
    <scope>INTERACTION WITH CDC25A</scope>
</reference>
<reference key="50">
    <citation type="journal article" date="2012" name="Cell. Microbiol.">
        <title>Human heat shock protein (Hsp) 90 interferes with Neisseria meningitidis adhesin A (NadA)-mediated adhesion and invasion.</title>
        <authorList>
            <person name="Montanari P."/>
            <person name="Bozza G."/>
            <person name="Capecchi B."/>
            <person name="Caproni E."/>
            <person name="Barrile R."/>
            <person name="Norais N."/>
            <person name="Capitani M."/>
            <person name="Sallese M."/>
            <person name="Cecchini P."/>
            <person name="Ciucchi L."/>
            <person name="Gao Z."/>
            <person name="Rappuoli R."/>
            <person name="Pizza M."/>
            <person name="Arico B."/>
            <person name="Merola M."/>
        </authorList>
    </citation>
    <scope>FUNCTION (MICROBIAL INFECTION)</scope>
    <scope>INTERACTION WITH N.MENINGITIDIS ADHESIN A (MICROBIAL INFECTION)</scope>
</reference>
<reference key="51">
    <citation type="journal article" date="2012" name="PLoS ONE">
        <title>Hsp90 is cleaved by reactive oxygen species at a highly conserved N-terminal amino acid motif.</title>
        <authorList>
            <person name="Beck R."/>
            <person name="Dejeans N."/>
            <person name="Glorieux C."/>
            <person name="Creton M."/>
            <person name="Delaive E."/>
            <person name="Dieu M."/>
            <person name="Raes M."/>
            <person name="Leveque P."/>
            <person name="Gallez B."/>
            <person name="Depuydt M."/>
            <person name="Collet J.F."/>
            <person name="Calderon P.B."/>
            <person name="Verrax J."/>
        </authorList>
    </citation>
    <scope>PROTEIN CLEAVAGE</scope>
    <scope>IDENTIFICATION BY MASS SPECTROMETRY</scope>
</reference>
<reference key="52">
    <citation type="journal article" date="2013" name="Am. J. Physiol.">
        <title>LPS induces pp60c-src-mediated tyrosine phosphorylation of Hsp90 in lung vascular endothelial cells and mouse lung.</title>
        <authorList>
            <person name="Barabutis N."/>
            <person name="Handa V."/>
            <person name="Dimitropoulou C."/>
            <person name="Rafikov R."/>
            <person name="Snead C."/>
            <person name="Kumar S."/>
            <person name="Joshi A."/>
            <person name="Thangjam G."/>
            <person name="Fulton D."/>
            <person name="Black S.M."/>
            <person name="Patel V."/>
            <person name="Catravas J.D."/>
        </authorList>
    </citation>
    <scope>INTERACTION WITH NOS3</scope>
    <scope>MUTAGENESIS OF TYR-301</scope>
    <scope>PHOSPHORYLATION AT TYR-301 BY SRC</scope>
</reference>
<reference key="53">
    <citation type="journal article" date="2013" name="J. Proteome Res.">
        <title>Toward a comprehensive characterization of a human cancer cell phosphoproteome.</title>
        <authorList>
            <person name="Zhou H."/>
            <person name="Di Palma S."/>
            <person name="Preisinger C."/>
            <person name="Peng M."/>
            <person name="Polat A.N."/>
            <person name="Heck A.J."/>
            <person name="Mohammed S."/>
        </authorList>
    </citation>
    <scope>PHOSPHORYLATION [LARGE SCALE ANALYSIS] AT SER-226; SER-255; THR-297; SER-445 AND THR-479</scope>
    <scope>IDENTIFICATION BY MASS SPECTROMETRY [LARGE SCALE ANALYSIS]</scope>
    <source>
        <tissue>Cervix carcinoma</tissue>
        <tissue>Erythroleukemia</tissue>
    </source>
</reference>
<reference key="54">
    <citation type="journal article" date="2013" name="Mol. Cell. Biol.">
        <title>Canonical and kinase activity-independent mechanisms for extracellular signal-regulated kinase 5 (ERK5) nuclear translocation require dissociation of Hsp90 from the ERK5-Cdc37 complex.</title>
        <authorList>
            <person name="Erazo T."/>
            <person name="Moreno A."/>
            <person name="Ruiz-Babot G."/>
            <person name="Rodriguez-Asiain A."/>
            <person name="Morrice N.A."/>
            <person name="Espadamala J."/>
            <person name="Bayascas J.R."/>
            <person name="Gomez N."/>
            <person name="Lizcano J.M."/>
        </authorList>
    </citation>
    <scope>INTERACTION WITH MAPK7</scope>
</reference>
<reference key="55">
    <citation type="journal article" date="2013" name="PLoS ONE">
        <title>Distinct roles of molecular chaperones HSP90alpha and HSP90beta in the biogenesis of KCNQ4 channels.</title>
        <authorList>
            <person name="Gao Y."/>
            <person name="Yechikov S."/>
            <person name="Vazquez A.E."/>
            <person name="Chen D."/>
            <person name="Nie L."/>
        </authorList>
    </citation>
    <scope>INTERACTION WITH KCNQ4</scope>
</reference>
<reference key="56">
    <citation type="journal article" date="2014" name="Biochem. Biophys. Res. Commun.">
        <title>Hsp70 and Hsp90 oppositely regulate TGF-beta signaling through CHIP/Stub1.</title>
        <authorList>
            <person name="Shang Y."/>
            <person name="Xu X."/>
            <person name="Duan X."/>
            <person name="Guo J."/>
            <person name="Wang Y."/>
            <person name="Ren F."/>
            <person name="He D."/>
            <person name="Chang Z."/>
        </authorList>
    </citation>
    <scope>FUNCTION</scope>
    <scope>INTERACTION WITH STUB1 AND SMAD3</scope>
</reference>
<reference key="57">
    <citation type="journal article" date="2014" name="Cancer Lett.">
        <title>SMYD2-dependent HSP90 methylation promotes cancer cell proliferation by regulating the chaperone complex formation.</title>
        <authorList>
            <person name="Hamamoto R."/>
            <person name="Toyokawa G."/>
            <person name="Nakakido M."/>
            <person name="Ueda K."/>
            <person name="Nakamura Y."/>
        </authorList>
    </citation>
    <scope>METHYLATION AT LYS-531 AND LYS-574 BY SMYD2</scope>
    <scope>IDENTIFICATION BY MASS SPECTROMETRY</scope>
    <scope>MUTAGENESIS OF LYS-531 AND LYS-574</scope>
    <scope>INTERACTION WITH STIP1 AND CDC37</scope>
    <scope>SUBCELLULAR LOCATION</scope>
</reference>
<reference key="58">
    <citation type="journal article" date="2014" name="J. Proteomics">
        <title>An enzyme assisted RP-RPLC approach for in-depth analysis of human liver phosphoproteome.</title>
        <authorList>
            <person name="Bian Y."/>
            <person name="Song C."/>
            <person name="Cheng K."/>
            <person name="Dong M."/>
            <person name="Wang F."/>
            <person name="Huang J."/>
            <person name="Sun D."/>
            <person name="Wang L."/>
            <person name="Ye M."/>
            <person name="Zou H."/>
        </authorList>
    </citation>
    <scope>PHOSPHORYLATION [LARGE SCALE ANALYSIS] AT SER-669</scope>
    <scope>IDENTIFICATION BY MASS SPECTROMETRY [LARGE SCALE ANALYSIS]</scope>
    <source>
        <tissue>Liver</tissue>
    </source>
</reference>
<reference key="59">
    <citation type="journal article" date="2014" name="Oncotarget">
        <title>The NLR-related protein NWD1 is associated with prostate cancer and modulates androgen receptor signaling.</title>
        <authorList>
            <person name="Correa R.G."/>
            <person name="Krajewska M."/>
            <person name="Ware C.F."/>
            <person name="Gerlic M."/>
            <person name="Reed J.C."/>
        </authorList>
    </citation>
    <scope>INTERACTION WITH NWD1</scope>
</reference>
<reference key="60">
    <citation type="journal article" date="2015" name="Biochim. Biophys. Acta">
        <title>Middle domain of human Hsp90 isoforms differentially binds Aha1 in human cells and alters Hsp90 activity in yeast.</title>
        <authorList>
            <person name="Synoradzki K."/>
            <person name="Bieganowski P."/>
        </authorList>
    </citation>
    <scope>INTERACTION WITH AHSA1; BIRC2 AND CDC37</scope>
    <scope>REGION</scope>
</reference>
<reference key="61">
    <citation type="journal article" date="2015" name="Front. Oncol.">
        <title>Hsp90, the concertmaster: tuning transcription.</title>
        <authorList>
            <person name="Khurana N."/>
            <person name="Bhattacharyya S."/>
        </authorList>
    </citation>
    <scope>REVIEW</scope>
</reference>
<reference key="62">
    <citation type="journal article" date="2015" name="PLoS ONE">
        <title>Client proteins and small molecule inhibitors display distinct binding preferences for constitutive and stress-induced HSP90 isoforms and their conformationally restricted mutants.</title>
        <authorList>
            <person name="Prince T.L."/>
            <person name="Kijima T."/>
            <person name="Tatokoro M."/>
            <person name="Lee S."/>
            <person name="Tsutsumi S."/>
            <person name="Yim K."/>
            <person name="Rivas C."/>
            <person name="Alarcon S."/>
            <person name="Schwartz H."/>
            <person name="Khamit-Kush K."/>
            <person name="Scroggins B.T."/>
            <person name="Beebe K."/>
            <person name="Trepel J.B."/>
            <person name="Neckers L."/>
        </authorList>
    </citation>
    <scope>INTERACTION WITH HSF1; HIF1A; ERBB2; MET; KEAP1 AND RHOBTB2</scope>
    <scope>MUTAGENESIS OF GLU-42 AND ASP-88</scope>
</reference>
<reference key="63">
    <citation type="journal article" date="2015" name="Proteomics">
        <title>N-terminome analysis of the human mitochondrial proteome.</title>
        <authorList>
            <person name="Vaca Jacome A.S."/>
            <person name="Rabilloud T."/>
            <person name="Schaeffer-Reiss C."/>
            <person name="Rompais M."/>
            <person name="Ayoub D."/>
            <person name="Lane L."/>
            <person name="Bairoch A."/>
            <person name="Van Dorsselaer A."/>
            <person name="Carapito C."/>
        </authorList>
    </citation>
    <scope>IDENTIFICATION BY MASS SPECTROMETRY [LARGE SCALE ANALYSIS]</scope>
</reference>
<reference key="64">
    <citation type="journal article" date="2016" name="Biochimie">
        <title>Hsp90: Friends, clients and natural foes.</title>
        <authorList>
            <person name="Verma S."/>
            <person name="Goyal S."/>
            <person name="Jamal S."/>
            <person name="Singh A."/>
            <person name="Grover A."/>
        </authorList>
    </citation>
    <scope>REVIEW</scope>
</reference>
<reference key="65">
    <citation type="journal article" date="2016" name="Biopolymers">
        <title>Review: The HSP90 molecular chaperone-an enigmatic ATPase.</title>
        <authorList>
            <person name="Pearl L.H."/>
        </authorList>
    </citation>
    <scope>REVIEW</scope>
</reference>
<reference key="66">
    <citation type="journal article" date="2020" name="Cell">
        <title>A Translocation Pathway for Vesicle-Mediated Unconventional Protein Secretion.</title>
        <authorList>
            <person name="Zhang M."/>
            <person name="Liu L."/>
            <person name="Lin X."/>
            <person name="Wang Y."/>
            <person name="Li Y."/>
            <person name="Guo Q."/>
            <person name="Li S."/>
            <person name="Sun Y."/>
            <person name="Tao X."/>
            <person name="Zhang D."/>
            <person name="Lv X."/>
            <person name="Zheng L."/>
            <person name="Ge L."/>
        </authorList>
    </citation>
    <scope>FUNCTION</scope>
    <scope>INTERACTION WITH IL1B</scope>
</reference>
<reference key="67">
    <citation type="journal article" date="2004" name="Chem. Biol.">
        <title>Structure-activity relationships in purine-based inhibitor binding to HSP90 isoforms.</title>
        <authorList>
            <person name="Wright L."/>
            <person name="Barril X."/>
            <person name="Dymock B."/>
            <person name="Sheridan L."/>
            <person name="Surgenor A."/>
            <person name="Beswick M."/>
            <person name="Drysdale M."/>
            <person name="Collier A."/>
            <person name="Massey A."/>
            <person name="Davies N."/>
            <person name="Fink A."/>
            <person name="Fromont C."/>
            <person name="Aherne W."/>
            <person name="Boxall K."/>
            <person name="Sharp S."/>
            <person name="Workman P."/>
            <person name="Hubbard R.E."/>
        </authorList>
    </citation>
    <scope>X-RAY CRYSTALLOGRAPHY (2.45 ANGSTROMS) OF 1-221 IN COMPLEX WITH PURINE ANALOG</scope>
</reference>
<reference key="68">
    <citation type="journal article" date="2004" name="Proc. Natl. Acad. Sci. U.S.A.">
        <title>3D structure of human FK506-binding protein 52: implications for the assembly of the glucocorticoid receptor/Hsp90/immunophilin heterocomplex.</title>
        <authorList>
            <person name="Wu B."/>
            <person name="Li P."/>
            <person name="Liu Y."/>
            <person name="Lou Z."/>
            <person name="Ding Y."/>
            <person name="Shu C."/>
            <person name="Ye S."/>
            <person name="Bartlam M."/>
            <person name="Shen B."/>
            <person name="Rao Z."/>
        </authorList>
    </citation>
    <scope>X-RAY CRYSTALLOGRAPHY (3.00 ANGSTROMS) OF 720-724 IN COMPLEX WITH FKBP4</scope>
</reference>
<reference key="69">
    <citation type="submission" date="2010-12" db="PDB data bank">
        <title>Crystal structure of the middle domain of human hsp90-beta.</title>
        <authorList>
            <consortium name="Structural genomics consortium (SGC)"/>
        </authorList>
    </citation>
    <scope>X-RAY CRYSTALLOGRAPHY (2.28 ANGSTROMS) OF 284-543</scope>
</reference>
<organism>
    <name type="scientific">Homo sapiens</name>
    <name type="common">Human</name>
    <dbReference type="NCBI Taxonomy" id="9606"/>
    <lineage>
        <taxon>Eukaryota</taxon>
        <taxon>Metazoa</taxon>
        <taxon>Chordata</taxon>
        <taxon>Craniata</taxon>
        <taxon>Vertebrata</taxon>
        <taxon>Euteleostomi</taxon>
        <taxon>Mammalia</taxon>
        <taxon>Eutheria</taxon>
        <taxon>Euarchontoglires</taxon>
        <taxon>Primates</taxon>
        <taxon>Haplorrhini</taxon>
        <taxon>Catarrhini</taxon>
        <taxon>Hominidae</taxon>
        <taxon>Homo</taxon>
    </lineage>
</organism>
<protein>
    <recommendedName>
        <fullName>Heat shock protein HSP 90-beta</fullName>
        <shortName>HSP 90</shortName>
    </recommendedName>
    <alternativeName>
        <fullName>Heat shock 84 kDa</fullName>
        <shortName>HSP 84</shortName>
        <shortName>HSP84</shortName>
    </alternativeName>
    <alternativeName>
        <fullName evidence="42">Heat shock protein family C member 3</fullName>
    </alternativeName>
</protein>